<name>ENOA_HUMAN</name>
<feature type="initiator methionine" description="Removed" evidence="20 31">
    <location>
        <position position="1"/>
    </location>
</feature>
<feature type="chain" id="PRO_0000134097" description="Alpha-enolase">
    <location>
        <begin position="2"/>
        <end position="434"/>
    </location>
</feature>
<feature type="region of interest" description="Epitope recognized by CAR and healthy patient antibodies">
    <location>
        <begin position="31"/>
        <end position="38"/>
    </location>
</feature>
<feature type="region of interest" description="Epitope recognized by CAR antibodies">
    <location>
        <begin position="56"/>
        <end position="63"/>
    </location>
</feature>
<feature type="region of interest" description="Required for repression of c-myc promoter activity">
    <location>
        <begin position="97"/>
        <end position="237"/>
    </location>
</feature>
<feature type="region of interest" description="Required for interaction with PLG" evidence="1">
    <location>
        <begin position="405"/>
        <end position="434"/>
    </location>
</feature>
<feature type="active site" description="Proton donor" evidence="2">
    <location>
        <position position="210"/>
    </location>
</feature>
<feature type="active site" description="Proton acceptor" evidence="2">
    <location>
        <position position="343"/>
    </location>
</feature>
<feature type="binding site" evidence="13">
    <location>
        <position position="40"/>
    </location>
    <ligand>
        <name>Mg(2+)</name>
        <dbReference type="ChEBI" id="CHEBI:18420"/>
        <label>1</label>
    </ligand>
</feature>
<feature type="binding site" evidence="2">
    <location>
        <position position="158"/>
    </location>
    <ligand>
        <name>substrate</name>
    </ligand>
</feature>
<feature type="binding site" evidence="2">
    <location>
        <position position="167"/>
    </location>
    <ligand>
        <name>substrate</name>
    </ligand>
</feature>
<feature type="binding site" evidence="13">
    <location>
        <position position="245"/>
    </location>
    <ligand>
        <name>Mg(2+)</name>
        <dbReference type="ChEBI" id="CHEBI:18420"/>
        <label>2</label>
    </ligand>
</feature>
<feature type="binding site" evidence="13">
    <location>
        <position position="293"/>
    </location>
    <ligand>
        <name>Mg(2+)</name>
        <dbReference type="ChEBI" id="CHEBI:18420"/>
        <label>2</label>
    </ligand>
</feature>
<feature type="binding site" evidence="2">
    <location>
        <position position="293"/>
    </location>
    <ligand>
        <name>substrate</name>
    </ligand>
</feature>
<feature type="binding site" evidence="13">
    <location>
        <position position="318"/>
    </location>
    <ligand>
        <name>Mg(2+)</name>
        <dbReference type="ChEBI" id="CHEBI:18420"/>
        <label>2</label>
    </ligand>
</feature>
<feature type="binding site" evidence="2">
    <location>
        <position position="318"/>
    </location>
    <ligand>
        <name>substrate</name>
    </ligand>
</feature>
<feature type="binding site" evidence="2">
    <location>
        <begin position="370"/>
        <end position="373"/>
    </location>
    <ligand>
        <name>substrate</name>
    </ligand>
</feature>
<feature type="binding site" evidence="2">
    <location>
        <position position="394"/>
    </location>
    <ligand>
        <name>substrate</name>
    </ligand>
</feature>
<feature type="modified residue" description="N-acetylserine" evidence="20 31">
    <location>
        <position position="2"/>
    </location>
</feature>
<feature type="modified residue" description="N6-acetyllysine" evidence="27">
    <location>
        <position position="5"/>
    </location>
</feature>
<feature type="modified residue" description="Phosphoserine" evidence="29">
    <location>
        <position position="27"/>
    </location>
</feature>
<feature type="modified residue" description="Phosphotyrosine" evidence="25">
    <location>
        <position position="44"/>
    </location>
</feature>
<feature type="modified residue" description="N6-acetyllysine; alternate" evidence="3">
    <location>
        <position position="60"/>
    </location>
</feature>
<feature type="modified residue" description="N6-succinyllysine; alternate" evidence="3">
    <location>
        <position position="60"/>
    </location>
</feature>
<feature type="modified residue" description="N6-acetyllysine" evidence="27">
    <location>
        <position position="64"/>
    </location>
</feature>
<feature type="modified residue" description="N6-acetyllysine" evidence="27">
    <location>
        <position position="71"/>
    </location>
</feature>
<feature type="modified residue" description="N6-acetyllysine; alternate" evidence="27">
    <location>
        <position position="89"/>
    </location>
</feature>
<feature type="modified residue" description="N6-succinyllysine; alternate" evidence="3">
    <location>
        <position position="89"/>
    </location>
</feature>
<feature type="modified residue" description="N6-acetyllysine" evidence="3">
    <location>
        <position position="92"/>
    </location>
</feature>
<feature type="modified residue" description="N6-acetyllysine" evidence="27">
    <location>
        <position position="126"/>
    </location>
</feature>
<feature type="modified residue" description="N6-acetyllysine" evidence="27">
    <location>
        <position position="193"/>
    </location>
</feature>
<feature type="modified residue" description="N6-acetyllysine" evidence="27">
    <location>
        <position position="199"/>
    </location>
</feature>
<feature type="modified residue" description="N6-acetyllysine; alternate" evidence="3">
    <location>
        <position position="202"/>
    </location>
</feature>
<feature type="modified residue" description="N6-(2-hydroxyisobutyryl)lysine; alternate" evidence="17">
    <location>
        <position position="228"/>
    </location>
</feature>
<feature type="modified residue" description="N6-acetyllysine; alternate" evidence="27">
    <location>
        <position position="228"/>
    </location>
</feature>
<feature type="modified residue" description="N6-succinyllysine; alternate" evidence="3">
    <location>
        <position position="228"/>
    </location>
</feature>
<feature type="modified residue" description="N6-acetyllysine; alternate" evidence="27">
    <location>
        <position position="233"/>
    </location>
</feature>
<feature type="modified residue" description="N6-malonyllysine; alternate" evidence="15">
    <location>
        <position position="233"/>
    </location>
</feature>
<feature type="modified residue" description="Phosphoserine" evidence="26 29">
    <location>
        <position position="254"/>
    </location>
</feature>
<feature type="modified residue" description="N6-acetyllysine" evidence="27">
    <location>
        <position position="256"/>
    </location>
</feature>
<feature type="modified residue" description="Phosphoserine" evidence="26 29 30">
    <location>
        <position position="263"/>
    </location>
</feature>
<feature type="modified residue" description="Phosphoserine" evidence="28 29">
    <location>
        <position position="272"/>
    </location>
</feature>
<feature type="modified residue" description="N6-(2-hydroxyisobutyryl)lysine; alternate" evidence="17">
    <location>
        <position position="281"/>
    </location>
</feature>
<feature type="modified residue" description="N6-acetyllysine; alternate" evidence="27">
    <location>
        <position position="281"/>
    </location>
</feature>
<feature type="modified residue" description="N6-acetyllysine" evidence="27">
    <location>
        <position position="285"/>
    </location>
</feature>
<feature type="modified residue" description="Phosphotyrosine" evidence="25">
    <location>
        <position position="287"/>
    </location>
</feature>
<feature type="modified residue" description="Phosphoserine" evidence="30">
    <location>
        <position position="291"/>
    </location>
</feature>
<feature type="modified residue" description="N6-acetyllysine" evidence="3">
    <location>
        <position position="335"/>
    </location>
</feature>
<feature type="modified residue" description="N6-acetyllysine" evidence="3">
    <location>
        <position position="343"/>
    </location>
</feature>
<feature type="modified residue" description="N6-acetyllysine" evidence="3">
    <location>
        <position position="406"/>
    </location>
</feature>
<feature type="modified residue" description="N6-acetyllysine; alternate" evidence="27">
    <location>
        <position position="420"/>
    </location>
</feature>
<feature type="modified residue" description="N6-malonyllysine; alternate" evidence="15">
    <location>
        <position position="420"/>
    </location>
</feature>
<feature type="modified residue" description="N6-succinyllysine; alternate" evidence="3">
    <location>
        <position position="420"/>
    </location>
</feature>
<feature type="cross-link" description="Glycyl lysine isopeptide (Lys-Gly) (interchain with G-Cter in SUMO2); alternate" evidence="32">
    <location>
        <position position="202"/>
    </location>
</feature>
<feature type="splice variant" id="VSP_018725" description="In isoform MBP-1." evidence="22">
    <location>
        <begin position="1"/>
        <end position="93"/>
    </location>
</feature>
<feature type="sequence variant" id="VAR_025172" description="In dbSNP:rs11544513." evidence="21">
    <original>N</original>
    <variation>K</variation>
    <location>
        <position position="177"/>
    </location>
</feature>
<feature type="sequence variant" id="VAR_048936" description="In dbSNP:rs11544514.">
    <original>P</original>
    <variation>Q</variation>
    <location>
        <position position="325"/>
    </location>
</feature>
<feature type="mutagenesis site" description="MBP1 protein production. No MBP1 protein production; when associated with I-97." evidence="5">
    <original>M</original>
    <variation>I</variation>
    <location>
        <position position="94"/>
    </location>
</feature>
<feature type="mutagenesis site" description="MBP1 protein production. No MBP1 protein production; when associated with I-94." evidence="5">
    <original>M</original>
    <variation>I</variation>
    <location>
        <position position="97"/>
    </location>
</feature>
<feature type="mutagenesis site" description="Decreased 2-hydroxyisobutyrylation leading to decreased phosphopyruvate hydratase activity." evidence="17">
    <original>K</original>
    <variation>R</variation>
    <location>
        <position position="281"/>
    </location>
</feature>
<feature type="mutagenesis site" description="Loss of transcriptional repression and cell growth inhibition; when associated with A-388." evidence="4">
    <original>L</original>
    <variation>A</variation>
    <location>
        <position position="384"/>
    </location>
</feature>
<feature type="mutagenesis site" description="Loss of transcriptional repression and cell growth inhibition; when associated with A-384." evidence="4">
    <original>L</original>
    <variation>A</variation>
    <location>
        <position position="388"/>
    </location>
</feature>
<feature type="sequence conflict" description="In Ref. 8; CAD97642." evidence="23" ref="8">
    <original>T</original>
    <variation>A</variation>
    <location>
        <position position="55"/>
    </location>
</feature>
<feature type="sequence conflict" description="In Ref. 7; BAD96237." evidence="23" ref="7">
    <original>V</original>
    <variation>A</variation>
    <location>
        <position position="78"/>
    </location>
</feature>
<feature type="sequence conflict" description="In Ref. 8; CAD97642." evidence="23" ref="8">
    <original>E</original>
    <variation>G</variation>
    <location>
        <position position="187"/>
    </location>
</feature>
<feature type="sequence conflict" description="In Ref. 7; BAD96912." evidence="23" ref="7">
    <original>K</original>
    <variation>R</variation>
    <location>
        <position position="199"/>
    </location>
</feature>
<feature type="sequence conflict" description="In Ref. 4; CAA59331." evidence="23" ref="4">
    <original>F</original>
    <variation>S</variation>
    <location>
        <position position="252"/>
    </location>
</feature>
<feature type="sequence conflict" description="In Ref. 8; CAD97642." evidence="23" ref="8">
    <original>S</original>
    <variation>I</variation>
    <location>
        <position position="310"/>
    </location>
</feature>
<feature type="strand" evidence="33">
    <location>
        <begin position="5"/>
        <end position="12"/>
    </location>
</feature>
<feature type="strand" evidence="33">
    <location>
        <begin position="18"/>
        <end position="26"/>
    </location>
</feature>
<feature type="strand" evidence="33">
    <location>
        <begin position="29"/>
        <end position="34"/>
    </location>
</feature>
<feature type="helix" evidence="33">
    <location>
        <begin position="57"/>
        <end position="59"/>
    </location>
</feature>
<feature type="helix" evidence="33">
    <location>
        <begin position="63"/>
        <end position="71"/>
    </location>
</feature>
<feature type="helix" evidence="33">
    <location>
        <begin position="73"/>
        <end position="79"/>
    </location>
</feature>
<feature type="helix" evidence="33">
    <location>
        <begin position="87"/>
        <end position="98"/>
    </location>
</feature>
<feature type="turn" evidence="33">
    <location>
        <begin position="104"/>
        <end position="106"/>
    </location>
</feature>
<feature type="helix" evidence="33">
    <location>
        <begin position="108"/>
        <end position="125"/>
    </location>
</feature>
<feature type="helix" evidence="33">
    <location>
        <begin position="130"/>
        <end position="138"/>
    </location>
</feature>
<feature type="strand" evidence="33">
    <location>
        <begin position="147"/>
        <end position="154"/>
    </location>
</feature>
<feature type="helix" evidence="33">
    <location>
        <begin position="156"/>
        <end position="158"/>
    </location>
</feature>
<feature type="strand" evidence="33">
    <location>
        <begin position="159"/>
        <end position="162"/>
    </location>
</feature>
<feature type="strand" evidence="33">
    <location>
        <begin position="167"/>
        <end position="171"/>
    </location>
</feature>
<feature type="helix" evidence="33">
    <location>
        <begin position="178"/>
        <end position="200"/>
    </location>
</feature>
<feature type="helix" evidence="33">
    <location>
        <begin position="202"/>
        <end position="204"/>
    </location>
</feature>
<feature type="helix" evidence="33">
    <location>
        <begin position="220"/>
        <end position="233"/>
    </location>
</feature>
<feature type="turn" evidence="33">
    <location>
        <begin position="237"/>
        <end position="239"/>
    </location>
</feature>
<feature type="strand" evidence="33">
    <location>
        <begin position="241"/>
        <end position="245"/>
    </location>
</feature>
<feature type="helix" evidence="33">
    <location>
        <begin position="248"/>
        <end position="250"/>
    </location>
</feature>
<feature type="turn" evidence="33">
    <location>
        <begin position="259"/>
        <end position="262"/>
    </location>
</feature>
<feature type="helix" evidence="33">
    <location>
        <begin position="267"/>
        <end position="269"/>
    </location>
</feature>
<feature type="helix" evidence="33">
    <location>
        <begin position="273"/>
        <end position="286"/>
    </location>
</feature>
<feature type="strand" evidence="33">
    <location>
        <begin position="289"/>
        <end position="293"/>
    </location>
</feature>
<feature type="helix" evidence="33">
    <location>
        <begin position="301"/>
        <end position="311"/>
    </location>
</feature>
<feature type="strand" evidence="33">
    <location>
        <begin position="313"/>
        <end position="318"/>
    </location>
</feature>
<feature type="turn" evidence="33">
    <location>
        <begin position="319"/>
        <end position="323"/>
    </location>
</feature>
<feature type="helix" evidence="33">
    <location>
        <begin position="325"/>
        <end position="334"/>
    </location>
</feature>
<feature type="strand" evidence="33">
    <location>
        <begin position="338"/>
        <end position="342"/>
    </location>
</feature>
<feature type="helix" evidence="33">
    <location>
        <begin position="344"/>
        <end position="347"/>
    </location>
</feature>
<feature type="helix" evidence="33">
    <location>
        <begin position="350"/>
        <end position="362"/>
    </location>
</feature>
<feature type="strand" evidence="33">
    <location>
        <begin position="366"/>
        <end position="370"/>
    </location>
</feature>
<feature type="helix" evidence="33">
    <location>
        <begin position="380"/>
        <end position="387"/>
    </location>
</feature>
<feature type="strand" evidence="33">
    <location>
        <begin position="391"/>
        <end position="394"/>
    </location>
</feature>
<feature type="helix" evidence="33">
    <location>
        <begin position="401"/>
        <end position="417"/>
    </location>
</feature>
<feature type="helix" evidence="33">
    <location>
        <begin position="418"/>
        <end position="420"/>
    </location>
</feature>
<feature type="helix" evidence="33">
    <location>
        <begin position="425"/>
        <end position="427"/>
    </location>
</feature>
<proteinExistence type="evidence at protein level"/>
<dbReference type="EC" id="4.2.1.11" evidence="9 17"/>
<dbReference type="EMBL" id="M14328">
    <property type="protein sequence ID" value="AAA52387.1"/>
    <property type="molecule type" value="mRNA"/>
</dbReference>
<dbReference type="EMBL" id="X16288">
    <property type="protein sequence ID" value="CAA34360.1"/>
    <property type="molecule type" value="Genomic_DNA"/>
</dbReference>
<dbReference type="EMBL" id="X16289">
    <property type="protein sequence ID" value="CAA34360.1"/>
    <property type="status" value="JOINED"/>
    <property type="molecule type" value="Genomic_DNA"/>
</dbReference>
<dbReference type="EMBL" id="X16290">
    <property type="protein sequence ID" value="CAA34360.1"/>
    <property type="status" value="JOINED"/>
    <property type="molecule type" value="Genomic_DNA"/>
</dbReference>
<dbReference type="EMBL" id="M55914">
    <property type="protein sequence ID" value="AAA35698.1"/>
    <property type="status" value="ALT_FRAME"/>
    <property type="molecule type" value="mRNA"/>
</dbReference>
<dbReference type="EMBL" id="X84907">
    <property type="protein sequence ID" value="CAA59331.1"/>
    <property type="molecule type" value="mRNA"/>
</dbReference>
<dbReference type="EMBL" id="BT007163">
    <property type="protein sequence ID" value="AAP35827.1"/>
    <property type="molecule type" value="mRNA"/>
</dbReference>
<dbReference type="EMBL" id="AK315417">
    <property type="protein sequence ID" value="BAG37806.1"/>
    <property type="molecule type" value="mRNA"/>
</dbReference>
<dbReference type="EMBL" id="AL833741">
    <property type="protein sequence ID" value="CAH56247.1"/>
    <property type="molecule type" value="mRNA"/>
</dbReference>
<dbReference type="EMBL" id="BX537400">
    <property type="protein sequence ID" value="CAD97642.1"/>
    <property type="molecule type" value="mRNA"/>
</dbReference>
<dbReference type="EMBL" id="AK222517">
    <property type="protein sequence ID" value="BAD96237.1"/>
    <property type="molecule type" value="mRNA"/>
</dbReference>
<dbReference type="EMBL" id="AK223192">
    <property type="protein sequence ID" value="BAD96912.1"/>
    <property type="molecule type" value="mRNA"/>
</dbReference>
<dbReference type="EMBL" id="DQ056744">
    <property type="protein sequence ID" value="AAY43128.1"/>
    <property type="molecule type" value="Genomic_DNA"/>
</dbReference>
<dbReference type="EMBL" id="AL139415">
    <property type="protein sequence ID" value="CAC42425.1"/>
    <property type="molecule type" value="Genomic_DNA"/>
</dbReference>
<dbReference type="EMBL" id="CH471130">
    <property type="protein sequence ID" value="EAW71604.1"/>
    <property type="molecule type" value="Genomic_DNA"/>
</dbReference>
<dbReference type="EMBL" id="BC001810">
    <property type="protein sequence ID" value="AAH01810.1"/>
    <property type="molecule type" value="mRNA"/>
</dbReference>
<dbReference type="EMBL" id="BC004325">
    <property type="protein sequence ID" value="AAH04325.1"/>
    <property type="molecule type" value="mRNA"/>
</dbReference>
<dbReference type="EMBL" id="BC004458">
    <property type="protein sequence ID" value="AAH04458.1"/>
    <property type="molecule type" value="mRNA"/>
</dbReference>
<dbReference type="EMBL" id="BC009218">
    <property type="protein sequence ID" value="AAH09218.2"/>
    <property type="molecule type" value="mRNA"/>
</dbReference>
<dbReference type="EMBL" id="BC009912">
    <property type="protein sequence ID" value="AAH09912.1"/>
    <property type="molecule type" value="mRNA"/>
</dbReference>
<dbReference type="EMBL" id="BC011130">
    <property type="protein sequence ID" value="AAH11130.1"/>
    <property type="molecule type" value="mRNA"/>
</dbReference>
<dbReference type="EMBL" id="BC015641">
    <property type="protein sequence ID" value="AAH15641.1"/>
    <property type="molecule type" value="mRNA"/>
</dbReference>
<dbReference type="EMBL" id="BC021166">
    <property type="protein sequence ID" value="AAH21166.2"/>
    <property type="molecule type" value="mRNA"/>
</dbReference>
<dbReference type="EMBL" id="BC022545">
    <property type="protein sequence ID" value="AAH22545.1"/>
    <property type="molecule type" value="mRNA"/>
</dbReference>
<dbReference type="EMBL" id="BC027725">
    <property type="protein sequence ID" value="AAH27725.1"/>
    <property type="molecule type" value="mRNA"/>
</dbReference>
<dbReference type="EMBL" id="BC050642">
    <property type="protein sequence ID" value="AAH50642.1"/>
    <property type="molecule type" value="mRNA"/>
</dbReference>
<dbReference type="EMBL" id="U88968">
    <property type="protein sequence ID" value="AAC39935.1"/>
    <property type="molecule type" value="mRNA"/>
</dbReference>
<dbReference type="EMBL" id="AF035286">
    <property type="protein sequence ID" value="AAB88178.1"/>
    <property type="molecule type" value="mRNA"/>
</dbReference>
<dbReference type="CCDS" id="CCDS97.1">
    <molecule id="P06733-1"/>
</dbReference>
<dbReference type="PIR" id="A39579">
    <property type="entry name" value="A39579"/>
</dbReference>
<dbReference type="PIR" id="S11696">
    <property type="entry name" value="A29170"/>
</dbReference>
<dbReference type="RefSeq" id="NP_001188412.1">
    <molecule id="P06733-2"/>
    <property type="nucleotide sequence ID" value="NM_001201483.4"/>
</dbReference>
<dbReference type="RefSeq" id="NP_001419.1">
    <molecule id="P06733-1"/>
    <property type="nucleotide sequence ID" value="NM_001428.5"/>
</dbReference>
<dbReference type="PDB" id="2PSN">
    <property type="method" value="X-ray"/>
    <property type="resolution" value="2.20 A"/>
    <property type="chains" value="A/B/C/D=1-434"/>
</dbReference>
<dbReference type="PDB" id="3B97">
    <property type="method" value="X-ray"/>
    <property type="resolution" value="2.20 A"/>
    <property type="chains" value="A/B/C/D=2-434"/>
</dbReference>
<dbReference type="PDB" id="5JLZ">
    <property type="method" value="X-ray"/>
    <property type="resolution" value="1.99 A"/>
    <property type="chains" value="E/F=26-40"/>
</dbReference>
<dbReference type="PDB" id="5LAX">
    <property type="method" value="X-ray"/>
    <property type="resolution" value="2.60 A"/>
    <property type="chains" value="E/F=26-40"/>
</dbReference>
<dbReference type="PDB" id="5NI9">
    <property type="method" value="X-ray"/>
    <property type="resolution" value="1.33 A"/>
    <property type="chains" value="C=326-340"/>
</dbReference>
<dbReference type="PDB" id="5NIG">
    <property type="method" value="X-ray"/>
    <property type="resolution" value="1.35 A"/>
    <property type="chains" value="C=326-340"/>
</dbReference>
<dbReference type="PDB" id="5OCK">
    <property type="method" value="X-ray"/>
    <property type="resolution" value="1.60 A"/>
    <property type="chains" value="A=5-21"/>
</dbReference>
<dbReference type="PDB" id="8TRL">
    <property type="method" value="X-ray"/>
    <property type="resolution" value="2.40 A"/>
    <property type="chains" value="C/F=10-22"/>
</dbReference>
<dbReference type="PDBsum" id="2PSN"/>
<dbReference type="PDBsum" id="3B97"/>
<dbReference type="PDBsum" id="5JLZ"/>
<dbReference type="PDBsum" id="5LAX"/>
<dbReference type="PDBsum" id="5NI9"/>
<dbReference type="PDBsum" id="5NIG"/>
<dbReference type="PDBsum" id="5OCK"/>
<dbReference type="PDBsum" id="8TRL"/>
<dbReference type="SMR" id="P06733"/>
<dbReference type="BioGRID" id="108338">
    <property type="interactions" value="730"/>
</dbReference>
<dbReference type="FunCoup" id="P06733">
    <property type="interactions" value="1402"/>
</dbReference>
<dbReference type="IntAct" id="P06733">
    <property type="interactions" value="152"/>
</dbReference>
<dbReference type="MINT" id="P06733"/>
<dbReference type="STRING" id="9606.ENSP00000495530"/>
<dbReference type="BindingDB" id="P06733"/>
<dbReference type="ChEMBL" id="CHEMBL3298"/>
<dbReference type="DrugBank" id="DB11638">
    <property type="generic name" value="Artenimol"/>
</dbReference>
<dbReference type="DrugBank" id="DB09130">
    <property type="generic name" value="Copper"/>
</dbReference>
<dbReference type="DrugBank" id="DB01593">
    <property type="generic name" value="Zinc"/>
</dbReference>
<dbReference type="DrugBank" id="DB14487">
    <property type="generic name" value="Zinc acetate"/>
</dbReference>
<dbReference type="DrugBank" id="DB14533">
    <property type="generic name" value="Zinc chloride"/>
</dbReference>
<dbReference type="DrugBank" id="DB14548">
    <property type="generic name" value="Zinc sulfate, unspecified form"/>
</dbReference>
<dbReference type="MoonDB" id="P06733">
    <property type="type" value="Predicted"/>
</dbReference>
<dbReference type="MoonProt" id="P06733"/>
<dbReference type="GlyCosmos" id="P06733">
    <property type="glycosylation" value="1 site, 1 glycan"/>
</dbReference>
<dbReference type="GlyGen" id="P06733">
    <property type="glycosylation" value="4 sites, 4 N-linked glycans (2 sites), 2 O-linked glycans (2 sites)"/>
</dbReference>
<dbReference type="iPTMnet" id="P06733"/>
<dbReference type="MetOSite" id="P06733"/>
<dbReference type="PhosphoSitePlus" id="P06733"/>
<dbReference type="SwissPalm" id="P06733"/>
<dbReference type="BioMuta" id="ENO1"/>
<dbReference type="DMDM" id="119339"/>
<dbReference type="OGP" id="P06733"/>
<dbReference type="REPRODUCTION-2DPAGE" id="IPI00465248"/>
<dbReference type="REPRODUCTION-2DPAGE" id="P06733"/>
<dbReference type="CPTAC" id="CPTAC-70"/>
<dbReference type="jPOST" id="P06733"/>
<dbReference type="MassIVE" id="P06733"/>
<dbReference type="PaxDb" id="9606-ENSP00000234590"/>
<dbReference type="PeptideAtlas" id="P06733"/>
<dbReference type="PRIDE" id="P06733"/>
<dbReference type="ProteomicsDB" id="51919">
    <molecule id="P06733-1"/>
</dbReference>
<dbReference type="ProteomicsDB" id="51920">
    <molecule id="P06733-2"/>
</dbReference>
<dbReference type="Pumba" id="P06733"/>
<dbReference type="TopDownProteomics" id="P06733-1">
    <molecule id="P06733-1"/>
</dbReference>
<dbReference type="TopDownProteomics" id="P06733-2">
    <molecule id="P06733-2"/>
</dbReference>
<dbReference type="ABCD" id="P06733">
    <property type="antibodies" value="5 sequenced antibodies"/>
</dbReference>
<dbReference type="Antibodypedia" id="4351">
    <property type="antibodies" value="876 antibodies from 44 providers"/>
</dbReference>
<dbReference type="DNASU" id="2023"/>
<dbReference type="Ensembl" id="ENST00000234590.10">
    <molecule id="P06733-1"/>
    <property type="protein sequence ID" value="ENSP00000234590.4"/>
    <property type="gene ID" value="ENSG00000074800.16"/>
</dbReference>
<dbReference type="GeneID" id="2023"/>
<dbReference type="KEGG" id="hsa:2023"/>
<dbReference type="MANE-Select" id="ENST00000234590.10">
    <property type="protein sequence ID" value="ENSP00000234590.4"/>
    <property type="RefSeq nucleotide sequence ID" value="NM_001428.5"/>
    <property type="RefSeq protein sequence ID" value="NP_001419.1"/>
</dbReference>
<dbReference type="UCSC" id="uc001apj.3">
    <molecule id="P06733-1"/>
    <property type="organism name" value="human"/>
</dbReference>
<dbReference type="AGR" id="HGNC:3350"/>
<dbReference type="CTD" id="2023"/>
<dbReference type="DisGeNET" id="2023"/>
<dbReference type="GeneCards" id="ENO1"/>
<dbReference type="HGNC" id="HGNC:3350">
    <property type="gene designation" value="ENO1"/>
</dbReference>
<dbReference type="HPA" id="ENSG00000074800">
    <property type="expression patterns" value="Low tissue specificity"/>
</dbReference>
<dbReference type="MalaCards" id="ENO1"/>
<dbReference type="MIM" id="172430">
    <property type="type" value="gene"/>
</dbReference>
<dbReference type="neXtProt" id="NX_P06733"/>
<dbReference type="OpenTargets" id="ENSG00000074800"/>
<dbReference type="PharmGKB" id="PA27786"/>
<dbReference type="VEuPathDB" id="HostDB:ENSG00000074800"/>
<dbReference type="eggNOG" id="KOG2670">
    <property type="taxonomic scope" value="Eukaryota"/>
</dbReference>
<dbReference type="GeneTree" id="ENSGT00950000182805"/>
<dbReference type="HOGENOM" id="CLU_031223_0_0_1"/>
<dbReference type="InParanoid" id="P06733"/>
<dbReference type="OMA" id="RCMMSHR"/>
<dbReference type="OrthoDB" id="1739814at2759"/>
<dbReference type="PAN-GO" id="P06733">
    <property type="GO annotations" value="3 GO annotations based on evolutionary models"/>
</dbReference>
<dbReference type="PhylomeDB" id="P06733"/>
<dbReference type="TreeFam" id="TF300391"/>
<dbReference type="BioCyc" id="MetaCyc:ENSG00000074800-MONOMER"/>
<dbReference type="BRENDA" id="4.2.1.11">
    <property type="organism ID" value="2681"/>
</dbReference>
<dbReference type="PathwayCommons" id="P06733"/>
<dbReference type="Reactome" id="R-HSA-70171">
    <property type="pathway name" value="Glycolysis"/>
</dbReference>
<dbReference type="Reactome" id="R-HSA-70263">
    <property type="pathway name" value="Gluconeogenesis"/>
</dbReference>
<dbReference type="Reactome" id="R-HSA-9636667">
    <property type="pathway name" value="Manipulation of host energy metabolism"/>
</dbReference>
<dbReference type="SABIO-RK" id="P06733"/>
<dbReference type="SignaLink" id="P06733"/>
<dbReference type="SIGNOR" id="P06733"/>
<dbReference type="UniPathway" id="UPA00109">
    <property type="reaction ID" value="UER00187"/>
</dbReference>
<dbReference type="BioGRID-ORCS" id="2023">
    <property type="hits" value="463 hits in 1178 CRISPR screens"/>
</dbReference>
<dbReference type="CD-CODE" id="91857CE7">
    <property type="entry name" value="Nucleolus"/>
</dbReference>
<dbReference type="CD-CODE" id="FB4E32DD">
    <property type="entry name" value="Presynaptic clusters and postsynaptic densities"/>
</dbReference>
<dbReference type="ChiTaRS" id="ENO1">
    <property type="organism name" value="human"/>
</dbReference>
<dbReference type="EvolutionaryTrace" id="P06733"/>
<dbReference type="GeneWiki" id="Alpha-enolase"/>
<dbReference type="GenomeRNAi" id="2023"/>
<dbReference type="Pharos" id="P06733">
    <property type="development level" value="Tchem"/>
</dbReference>
<dbReference type="PRO" id="PR:P06733"/>
<dbReference type="Proteomes" id="UP000005640">
    <property type="component" value="Chromosome 1"/>
</dbReference>
<dbReference type="RNAct" id="P06733">
    <property type="molecule type" value="protein"/>
</dbReference>
<dbReference type="Bgee" id="ENSG00000074800">
    <property type="expression patterns" value="Expressed in metanephros cortex and 220 other cell types or tissues"/>
</dbReference>
<dbReference type="ExpressionAtlas" id="P06733">
    <property type="expression patterns" value="baseline and differential"/>
</dbReference>
<dbReference type="GO" id="GO:0005938">
    <property type="term" value="C:cell cortex"/>
    <property type="evidence" value="ECO:0000314"/>
    <property type="project" value="CAFA"/>
</dbReference>
<dbReference type="GO" id="GO:0009986">
    <property type="term" value="C:cell surface"/>
    <property type="evidence" value="ECO:0000314"/>
    <property type="project" value="CAFA"/>
</dbReference>
<dbReference type="GO" id="GO:0005737">
    <property type="term" value="C:cytoplasm"/>
    <property type="evidence" value="ECO:0000314"/>
    <property type="project" value="LIFEdb"/>
</dbReference>
<dbReference type="GO" id="GO:0005829">
    <property type="term" value="C:cytosol"/>
    <property type="evidence" value="ECO:0000314"/>
    <property type="project" value="CAFA"/>
</dbReference>
<dbReference type="GO" id="GO:0070062">
    <property type="term" value="C:extracellular exosome"/>
    <property type="evidence" value="ECO:0007005"/>
    <property type="project" value="UniProtKB"/>
</dbReference>
<dbReference type="GO" id="GO:0005615">
    <property type="term" value="C:extracellular space"/>
    <property type="evidence" value="ECO:0007005"/>
    <property type="project" value="UniProtKB"/>
</dbReference>
<dbReference type="GO" id="GO:0031430">
    <property type="term" value="C:M band"/>
    <property type="evidence" value="ECO:0007669"/>
    <property type="project" value="UniProtKB-SubCell"/>
</dbReference>
<dbReference type="GO" id="GO:0016020">
    <property type="term" value="C:membrane"/>
    <property type="evidence" value="ECO:0000314"/>
    <property type="project" value="CAFA"/>
</dbReference>
<dbReference type="GO" id="GO:0005640">
    <property type="term" value="C:nuclear outer membrane"/>
    <property type="evidence" value="ECO:0000314"/>
    <property type="project" value="UniProtKB"/>
</dbReference>
<dbReference type="GO" id="GO:0005634">
    <property type="term" value="C:nucleus"/>
    <property type="evidence" value="ECO:0007005"/>
    <property type="project" value="UniProtKB"/>
</dbReference>
<dbReference type="GO" id="GO:0000015">
    <property type="term" value="C:phosphopyruvate hydratase complex"/>
    <property type="evidence" value="ECO:0000314"/>
    <property type="project" value="CAFA"/>
</dbReference>
<dbReference type="GO" id="GO:0005886">
    <property type="term" value="C:plasma membrane"/>
    <property type="evidence" value="ECO:0000314"/>
    <property type="project" value="CAFA"/>
</dbReference>
<dbReference type="GO" id="GO:0045296">
    <property type="term" value="F:cadherin binding"/>
    <property type="evidence" value="ECO:0007005"/>
    <property type="project" value="BHF-UCL"/>
</dbReference>
<dbReference type="GO" id="GO:0001227">
    <property type="term" value="F:DNA-binding transcription repressor activity, RNA polymerase II-specific"/>
    <property type="evidence" value="ECO:0000314"/>
    <property type="project" value="NTNU_SB"/>
</dbReference>
<dbReference type="GO" id="GO:0051020">
    <property type="term" value="F:GTPase binding"/>
    <property type="evidence" value="ECO:0000353"/>
    <property type="project" value="UniProtKB"/>
</dbReference>
<dbReference type="GO" id="GO:0000287">
    <property type="term" value="F:magnesium ion binding"/>
    <property type="evidence" value="ECO:0007669"/>
    <property type="project" value="InterPro"/>
</dbReference>
<dbReference type="GO" id="GO:0004634">
    <property type="term" value="F:phosphopyruvate hydratase activity"/>
    <property type="evidence" value="ECO:0000314"/>
    <property type="project" value="UniProtKB"/>
</dbReference>
<dbReference type="GO" id="GO:0042803">
    <property type="term" value="F:protein homodimerization activity"/>
    <property type="evidence" value="ECO:0000314"/>
    <property type="project" value="CAFA"/>
</dbReference>
<dbReference type="GO" id="GO:0003723">
    <property type="term" value="F:RNA binding"/>
    <property type="evidence" value="ECO:0007005"/>
    <property type="project" value="UniProtKB"/>
</dbReference>
<dbReference type="GO" id="GO:0000977">
    <property type="term" value="F:RNA polymerase II transcription regulatory region sequence-specific DNA binding"/>
    <property type="evidence" value="ECO:0000314"/>
    <property type="project" value="NTNU_SB"/>
</dbReference>
<dbReference type="GO" id="GO:0003714">
    <property type="term" value="F:transcription corepressor activity"/>
    <property type="evidence" value="ECO:0000314"/>
    <property type="project" value="UniProtKB"/>
</dbReference>
<dbReference type="GO" id="GO:0001222">
    <property type="term" value="F:transcription corepressor binding"/>
    <property type="evidence" value="ECO:0000353"/>
    <property type="project" value="UniProtKB"/>
</dbReference>
<dbReference type="GO" id="GO:0061621">
    <property type="term" value="P:canonical glycolysis"/>
    <property type="evidence" value="ECO:0000314"/>
    <property type="project" value="UniProtKB"/>
</dbReference>
<dbReference type="GO" id="GO:0006094">
    <property type="term" value="P:gluconeogenesis"/>
    <property type="evidence" value="ECO:0000304"/>
    <property type="project" value="Reactome"/>
</dbReference>
<dbReference type="GO" id="GO:0006096">
    <property type="term" value="P:glycolytic process"/>
    <property type="evidence" value="ECO:0000318"/>
    <property type="project" value="GO_Central"/>
</dbReference>
<dbReference type="GO" id="GO:0030308">
    <property type="term" value="P:negative regulation of cell growth"/>
    <property type="evidence" value="ECO:0000314"/>
    <property type="project" value="UniProtKB"/>
</dbReference>
<dbReference type="GO" id="GO:0045892">
    <property type="term" value="P:negative regulation of DNA-templated transcription"/>
    <property type="evidence" value="ECO:0000314"/>
    <property type="project" value="UniProtKB"/>
</dbReference>
<dbReference type="GO" id="GO:1903298">
    <property type="term" value="P:negative regulation of hypoxia-induced intrinsic apoptotic signaling pathway"/>
    <property type="evidence" value="ECO:0000314"/>
    <property type="project" value="CAFA"/>
</dbReference>
<dbReference type="GO" id="GO:0000122">
    <property type="term" value="P:negative regulation of transcription by RNA polymerase II"/>
    <property type="evidence" value="ECO:0000314"/>
    <property type="project" value="CAFA"/>
</dbReference>
<dbReference type="GO" id="GO:2001171">
    <property type="term" value="P:positive regulation of ATP biosynthetic process"/>
    <property type="evidence" value="ECO:0000314"/>
    <property type="project" value="CAFA"/>
</dbReference>
<dbReference type="GO" id="GO:0045933">
    <property type="term" value="P:positive regulation of muscle contraction"/>
    <property type="evidence" value="ECO:0000316"/>
    <property type="project" value="CAFA"/>
</dbReference>
<dbReference type="GO" id="GO:0010756">
    <property type="term" value="P:positive regulation of plasminogen activation"/>
    <property type="evidence" value="ECO:0000315"/>
    <property type="project" value="CAFA"/>
</dbReference>
<dbReference type="GO" id="GO:0009615">
    <property type="term" value="P:response to virus"/>
    <property type="evidence" value="ECO:0000270"/>
    <property type="project" value="UniProtKB"/>
</dbReference>
<dbReference type="CDD" id="cd03313">
    <property type="entry name" value="enolase"/>
    <property type="match status" value="1"/>
</dbReference>
<dbReference type="FunFam" id="3.30.390.10:FF:000001">
    <property type="entry name" value="Enolase"/>
    <property type="match status" value="1"/>
</dbReference>
<dbReference type="FunFam" id="3.20.20.120:FF:000002">
    <property type="entry name" value="Enolase 1"/>
    <property type="match status" value="1"/>
</dbReference>
<dbReference type="Gene3D" id="3.20.20.120">
    <property type="entry name" value="Enolase-like C-terminal domain"/>
    <property type="match status" value="1"/>
</dbReference>
<dbReference type="Gene3D" id="3.30.390.10">
    <property type="entry name" value="Enolase-like, N-terminal domain"/>
    <property type="match status" value="1"/>
</dbReference>
<dbReference type="HAMAP" id="MF_00318">
    <property type="entry name" value="Enolase"/>
    <property type="match status" value="1"/>
</dbReference>
<dbReference type="InterPro" id="IPR000941">
    <property type="entry name" value="Enolase"/>
</dbReference>
<dbReference type="InterPro" id="IPR036849">
    <property type="entry name" value="Enolase-like_C_sf"/>
</dbReference>
<dbReference type="InterPro" id="IPR029017">
    <property type="entry name" value="Enolase-like_N"/>
</dbReference>
<dbReference type="InterPro" id="IPR020810">
    <property type="entry name" value="Enolase_C"/>
</dbReference>
<dbReference type="InterPro" id="IPR020809">
    <property type="entry name" value="Enolase_CS"/>
</dbReference>
<dbReference type="InterPro" id="IPR020811">
    <property type="entry name" value="Enolase_N"/>
</dbReference>
<dbReference type="NCBIfam" id="TIGR01060">
    <property type="entry name" value="eno"/>
    <property type="match status" value="1"/>
</dbReference>
<dbReference type="PANTHER" id="PTHR11902:SF12">
    <property type="entry name" value="ALPHA-ENOLASE"/>
    <property type="match status" value="1"/>
</dbReference>
<dbReference type="PANTHER" id="PTHR11902">
    <property type="entry name" value="ENOLASE"/>
    <property type="match status" value="1"/>
</dbReference>
<dbReference type="Pfam" id="PF00113">
    <property type="entry name" value="Enolase_C"/>
    <property type="match status" value="1"/>
</dbReference>
<dbReference type="Pfam" id="PF03952">
    <property type="entry name" value="Enolase_N"/>
    <property type="match status" value="1"/>
</dbReference>
<dbReference type="PIRSF" id="PIRSF001400">
    <property type="entry name" value="Enolase"/>
    <property type="match status" value="1"/>
</dbReference>
<dbReference type="PRINTS" id="PR00148">
    <property type="entry name" value="ENOLASE"/>
</dbReference>
<dbReference type="SFLD" id="SFLDF00002">
    <property type="entry name" value="enolase"/>
    <property type="match status" value="1"/>
</dbReference>
<dbReference type="SFLD" id="SFLDG00178">
    <property type="entry name" value="enolase"/>
    <property type="match status" value="1"/>
</dbReference>
<dbReference type="SMART" id="SM01192">
    <property type="entry name" value="Enolase_C"/>
    <property type="match status" value="1"/>
</dbReference>
<dbReference type="SMART" id="SM01193">
    <property type="entry name" value="Enolase_N"/>
    <property type="match status" value="1"/>
</dbReference>
<dbReference type="SUPFAM" id="SSF51604">
    <property type="entry name" value="Enolase C-terminal domain-like"/>
    <property type="match status" value="1"/>
</dbReference>
<dbReference type="SUPFAM" id="SSF54826">
    <property type="entry name" value="Enolase N-terminal domain-like"/>
    <property type="match status" value="1"/>
</dbReference>
<dbReference type="PROSITE" id="PS00164">
    <property type="entry name" value="ENOLASE"/>
    <property type="match status" value="1"/>
</dbReference>
<reference key="1">
    <citation type="journal article" date="1986" name="Proc. Natl. Acad. Sci. U.S.A.">
        <title>Molecular cloning and nucleotide sequence of a full-length cDNA for human alpha enolase.</title>
        <authorList>
            <person name="Giallongo A."/>
            <person name="Feo S."/>
            <person name="Moore R."/>
            <person name="Croce C.M."/>
            <person name="Showe L.C."/>
        </authorList>
    </citation>
    <scope>NUCLEOTIDE SEQUENCE [MRNA] (ISOFORM ALPHA-ENOLASE)</scope>
</reference>
<reference key="2">
    <citation type="journal article" date="1990" name="Eur. J. Biochem.">
        <title>Structure of the human gene for alpha-enolase.</title>
        <authorList>
            <person name="Giallongo A."/>
            <person name="Oliva D."/>
            <person name="Cali L."/>
            <person name="Barba G."/>
            <person name="Barbieri G."/>
            <person name="Feo S."/>
        </authorList>
    </citation>
    <scope>NUCLEOTIDE SEQUENCE [GENOMIC DNA] (ISOFORM ALPHA-ENOLASE)</scope>
    <source>
        <tissue>T-cell</tissue>
    </source>
</reference>
<reference key="3">
    <citation type="journal article" date="1991" name="Mol. Cell. Biol.">
        <title>Cloning and characterization of a human c-myc promoter-binding protein.</title>
        <authorList>
            <person name="Ray R."/>
            <person name="Miller D.M."/>
        </authorList>
    </citation>
    <scope>NUCLEOTIDE SEQUENCE [MRNA] (ISOFORM MBP-1)</scope>
    <scope>FUNCTION</scope>
    <source>
        <tissue>Cervix carcinoma</tissue>
    </source>
</reference>
<reference key="4">
    <citation type="journal article" date="1995" name="J. Autoimmun.">
        <title>Autoreactive epitopes within the human alpha-enolase and their recognition by sera from patients with endometriosis.</title>
        <authorList>
            <person name="Walter M."/>
            <person name="Berg H."/>
            <person name="Leidenberger F.A."/>
            <person name="Schweppe K.W."/>
            <person name="Northemann W."/>
        </authorList>
    </citation>
    <scope>NUCLEOTIDE SEQUENCE [MRNA] (ISOFORM ALPHA-ENOLASE)</scope>
    <scope>MARKER FOR ENDOMETRIOSIS</scope>
    <source>
        <tissue>Endometrium</tissue>
    </source>
</reference>
<reference key="5">
    <citation type="submission" date="2003-05" db="EMBL/GenBank/DDBJ databases">
        <title>Cloning of human full-length CDSs in BD Creator(TM) system donor vector.</title>
        <authorList>
            <person name="Kalnine N."/>
            <person name="Chen X."/>
            <person name="Rolfs A."/>
            <person name="Halleck A."/>
            <person name="Hines L."/>
            <person name="Eisenstein S."/>
            <person name="Koundinya M."/>
            <person name="Raphael J."/>
            <person name="Moreira D."/>
            <person name="Kelley T."/>
            <person name="LaBaer J."/>
            <person name="Lin Y."/>
            <person name="Phelan M."/>
            <person name="Farmer A."/>
        </authorList>
    </citation>
    <scope>NUCLEOTIDE SEQUENCE [LARGE SCALE MRNA] (ISOFORM ALPHA-ENOLASE)</scope>
</reference>
<reference key="6">
    <citation type="journal article" date="2004" name="Nat. Genet.">
        <title>Complete sequencing and characterization of 21,243 full-length human cDNAs.</title>
        <authorList>
            <person name="Ota T."/>
            <person name="Suzuki Y."/>
            <person name="Nishikawa T."/>
            <person name="Otsuki T."/>
            <person name="Sugiyama T."/>
            <person name="Irie R."/>
            <person name="Wakamatsu A."/>
            <person name="Hayashi K."/>
            <person name="Sato H."/>
            <person name="Nagai K."/>
            <person name="Kimura K."/>
            <person name="Makita H."/>
            <person name="Sekine M."/>
            <person name="Obayashi M."/>
            <person name="Nishi T."/>
            <person name="Shibahara T."/>
            <person name="Tanaka T."/>
            <person name="Ishii S."/>
            <person name="Yamamoto J."/>
            <person name="Saito K."/>
            <person name="Kawai Y."/>
            <person name="Isono Y."/>
            <person name="Nakamura Y."/>
            <person name="Nagahari K."/>
            <person name="Murakami K."/>
            <person name="Yasuda T."/>
            <person name="Iwayanagi T."/>
            <person name="Wagatsuma M."/>
            <person name="Shiratori A."/>
            <person name="Sudo H."/>
            <person name="Hosoiri T."/>
            <person name="Kaku Y."/>
            <person name="Kodaira H."/>
            <person name="Kondo H."/>
            <person name="Sugawara M."/>
            <person name="Takahashi M."/>
            <person name="Kanda K."/>
            <person name="Yokoi T."/>
            <person name="Furuya T."/>
            <person name="Kikkawa E."/>
            <person name="Omura Y."/>
            <person name="Abe K."/>
            <person name="Kamihara K."/>
            <person name="Katsuta N."/>
            <person name="Sato K."/>
            <person name="Tanikawa M."/>
            <person name="Yamazaki M."/>
            <person name="Ninomiya K."/>
            <person name="Ishibashi T."/>
            <person name="Yamashita H."/>
            <person name="Murakawa K."/>
            <person name="Fujimori K."/>
            <person name="Tanai H."/>
            <person name="Kimata M."/>
            <person name="Watanabe M."/>
            <person name="Hiraoka S."/>
            <person name="Chiba Y."/>
            <person name="Ishida S."/>
            <person name="Ono Y."/>
            <person name="Takiguchi S."/>
            <person name="Watanabe S."/>
            <person name="Yosida M."/>
            <person name="Hotuta T."/>
            <person name="Kusano J."/>
            <person name="Kanehori K."/>
            <person name="Takahashi-Fujii A."/>
            <person name="Hara H."/>
            <person name="Tanase T.-O."/>
            <person name="Nomura Y."/>
            <person name="Togiya S."/>
            <person name="Komai F."/>
            <person name="Hara R."/>
            <person name="Takeuchi K."/>
            <person name="Arita M."/>
            <person name="Imose N."/>
            <person name="Musashino K."/>
            <person name="Yuuki H."/>
            <person name="Oshima A."/>
            <person name="Sasaki N."/>
            <person name="Aotsuka S."/>
            <person name="Yoshikawa Y."/>
            <person name="Matsunawa H."/>
            <person name="Ichihara T."/>
            <person name="Shiohata N."/>
            <person name="Sano S."/>
            <person name="Moriya S."/>
            <person name="Momiyama H."/>
            <person name="Satoh N."/>
            <person name="Takami S."/>
            <person name="Terashima Y."/>
            <person name="Suzuki O."/>
            <person name="Nakagawa S."/>
            <person name="Senoh A."/>
            <person name="Mizoguchi H."/>
            <person name="Goto Y."/>
            <person name="Shimizu F."/>
            <person name="Wakebe H."/>
            <person name="Hishigaki H."/>
            <person name="Watanabe T."/>
            <person name="Sugiyama A."/>
            <person name="Takemoto M."/>
            <person name="Kawakami B."/>
            <person name="Yamazaki M."/>
            <person name="Watanabe K."/>
            <person name="Kumagai A."/>
            <person name="Itakura S."/>
            <person name="Fukuzumi Y."/>
            <person name="Fujimori Y."/>
            <person name="Komiyama M."/>
            <person name="Tashiro H."/>
            <person name="Tanigami A."/>
            <person name="Fujiwara T."/>
            <person name="Ono T."/>
            <person name="Yamada K."/>
            <person name="Fujii Y."/>
            <person name="Ozaki K."/>
            <person name="Hirao M."/>
            <person name="Ohmori Y."/>
            <person name="Kawabata A."/>
            <person name="Hikiji T."/>
            <person name="Kobatake N."/>
            <person name="Inagaki H."/>
            <person name="Ikema Y."/>
            <person name="Okamoto S."/>
            <person name="Okitani R."/>
            <person name="Kawakami T."/>
            <person name="Noguchi S."/>
            <person name="Itoh T."/>
            <person name="Shigeta K."/>
            <person name="Senba T."/>
            <person name="Matsumura K."/>
            <person name="Nakajima Y."/>
            <person name="Mizuno T."/>
            <person name="Morinaga M."/>
            <person name="Sasaki M."/>
            <person name="Togashi T."/>
            <person name="Oyama M."/>
            <person name="Hata H."/>
            <person name="Watanabe M."/>
            <person name="Komatsu T."/>
            <person name="Mizushima-Sugano J."/>
            <person name="Satoh T."/>
            <person name="Shirai Y."/>
            <person name="Takahashi Y."/>
            <person name="Nakagawa K."/>
            <person name="Okumura K."/>
            <person name="Nagase T."/>
            <person name="Nomura N."/>
            <person name="Kikuchi H."/>
            <person name="Masuho Y."/>
            <person name="Yamashita R."/>
            <person name="Nakai K."/>
            <person name="Yada T."/>
            <person name="Nakamura Y."/>
            <person name="Ohara O."/>
            <person name="Isogai T."/>
            <person name="Sugano S."/>
        </authorList>
    </citation>
    <scope>NUCLEOTIDE SEQUENCE [LARGE SCALE MRNA] (ISOFORM ALPHA-ENOLASE)</scope>
    <source>
        <tissue>Umbilical cord blood</tissue>
    </source>
</reference>
<reference key="7">
    <citation type="submission" date="2005-04" db="EMBL/GenBank/DDBJ databases">
        <authorList>
            <person name="Suzuki Y."/>
            <person name="Sugano S."/>
            <person name="Totoki Y."/>
            <person name="Toyoda A."/>
            <person name="Takeda T."/>
            <person name="Sakaki Y."/>
            <person name="Tanaka A."/>
            <person name="Yokoyama S."/>
        </authorList>
    </citation>
    <scope>NUCLEOTIDE SEQUENCE [LARGE SCALE MRNA] (ISOFORM ALPHA-ENOLASE)</scope>
    <source>
        <tissue>Adipose tissue</tissue>
        <tissue>Kidney proximal tubule</tissue>
    </source>
</reference>
<reference key="8">
    <citation type="journal article" date="2007" name="BMC Genomics">
        <title>The full-ORF clone resource of the German cDNA consortium.</title>
        <authorList>
            <person name="Bechtel S."/>
            <person name="Rosenfelder H."/>
            <person name="Duda A."/>
            <person name="Schmidt C.P."/>
            <person name="Ernst U."/>
            <person name="Wellenreuther R."/>
            <person name="Mehrle A."/>
            <person name="Schuster C."/>
            <person name="Bahr A."/>
            <person name="Bloecker H."/>
            <person name="Heubner D."/>
            <person name="Hoerlein A."/>
            <person name="Michel G."/>
            <person name="Wedler H."/>
            <person name="Koehrer K."/>
            <person name="Ottenwaelder B."/>
            <person name="Poustka A."/>
            <person name="Wiemann S."/>
            <person name="Schupp I."/>
        </authorList>
    </citation>
    <scope>NUCLEOTIDE SEQUENCE [LARGE SCALE MRNA] (ISOFORM ALPHA-ENOLASE)</scope>
    <source>
        <tissue>Retina</tissue>
        <tissue>Stomach</tissue>
    </source>
</reference>
<reference key="9">
    <citation type="submission" date="2005-05" db="EMBL/GenBank/DDBJ databases">
        <authorList>
            <consortium name="NIEHS SNPs program"/>
        </authorList>
    </citation>
    <scope>NUCLEOTIDE SEQUENCE [GENOMIC DNA]</scope>
    <scope>VARIANT LYS-177</scope>
</reference>
<reference key="10">
    <citation type="journal article" date="2006" name="Nature">
        <title>The DNA sequence and biological annotation of human chromosome 1.</title>
        <authorList>
            <person name="Gregory S.G."/>
            <person name="Barlow K.F."/>
            <person name="McLay K.E."/>
            <person name="Kaul R."/>
            <person name="Swarbreck D."/>
            <person name="Dunham A."/>
            <person name="Scott C.E."/>
            <person name="Howe K.L."/>
            <person name="Woodfine K."/>
            <person name="Spencer C.C.A."/>
            <person name="Jones M.C."/>
            <person name="Gillson C."/>
            <person name="Searle S."/>
            <person name="Zhou Y."/>
            <person name="Kokocinski F."/>
            <person name="McDonald L."/>
            <person name="Evans R."/>
            <person name="Phillips K."/>
            <person name="Atkinson A."/>
            <person name="Cooper R."/>
            <person name="Jones C."/>
            <person name="Hall R.E."/>
            <person name="Andrews T.D."/>
            <person name="Lloyd C."/>
            <person name="Ainscough R."/>
            <person name="Almeida J.P."/>
            <person name="Ambrose K.D."/>
            <person name="Anderson F."/>
            <person name="Andrew R.W."/>
            <person name="Ashwell R.I.S."/>
            <person name="Aubin K."/>
            <person name="Babbage A.K."/>
            <person name="Bagguley C.L."/>
            <person name="Bailey J."/>
            <person name="Beasley H."/>
            <person name="Bethel G."/>
            <person name="Bird C.P."/>
            <person name="Bray-Allen S."/>
            <person name="Brown J.Y."/>
            <person name="Brown A.J."/>
            <person name="Buckley D."/>
            <person name="Burton J."/>
            <person name="Bye J."/>
            <person name="Carder C."/>
            <person name="Chapman J.C."/>
            <person name="Clark S.Y."/>
            <person name="Clarke G."/>
            <person name="Clee C."/>
            <person name="Cobley V."/>
            <person name="Collier R.E."/>
            <person name="Corby N."/>
            <person name="Coville G.J."/>
            <person name="Davies J."/>
            <person name="Deadman R."/>
            <person name="Dunn M."/>
            <person name="Earthrowl M."/>
            <person name="Ellington A.G."/>
            <person name="Errington H."/>
            <person name="Frankish A."/>
            <person name="Frankland J."/>
            <person name="French L."/>
            <person name="Garner P."/>
            <person name="Garnett J."/>
            <person name="Gay L."/>
            <person name="Ghori M.R.J."/>
            <person name="Gibson R."/>
            <person name="Gilby L.M."/>
            <person name="Gillett W."/>
            <person name="Glithero R.J."/>
            <person name="Grafham D.V."/>
            <person name="Griffiths C."/>
            <person name="Griffiths-Jones S."/>
            <person name="Grocock R."/>
            <person name="Hammond S."/>
            <person name="Harrison E.S.I."/>
            <person name="Hart E."/>
            <person name="Haugen E."/>
            <person name="Heath P.D."/>
            <person name="Holmes S."/>
            <person name="Holt K."/>
            <person name="Howden P.J."/>
            <person name="Hunt A.R."/>
            <person name="Hunt S.E."/>
            <person name="Hunter G."/>
            <person name="Isherwood J."/>
            <person name="James R."/>
            <person name="Johnson C."/>
            <person name="Johnson D."/>
            <person name="Joy A."/>
            <person name="Kay M."/>
            <person name="Kershaw J.K."/>
            <person name="Kibukawa M."/>
            <person name="Kimberley A.M."/>
            <person name="King A."/>
            <person name="Knights A.J."/>
            <person name="Lad H."/>
            <person name="Laird G."/>
            <person name="Lawlor S."/>
            <person name="Leongamornlert D.A."/>
            <person name="Lloyd D.M."/>
            <person name="Loveland J."/>
            <person name="Lovell J."/>
            <person name="Lush M.J."/>
            <person name="Lyne R."/>
            <person name="Martin S."/>
            <person name="Mashreghi-Mohammadi M."/>
            <person name="Matthews L."/>
            <person name="Matthews N.S.W."/>
            <person name="McLaren S."/>
            <person name="Milne S."/>
            <person name="Mistry S."/>
            <person name="Moore M.J.F."/>
            <person name="Nickerson T."/>
            <person name="O'Dell C.N."/>
            <person name="Oliver K."/>
            <person name="Palmeiri A."/>
            <person name="Palmer S.A."/>
            <person name="Parker A."/>
            <person name="Patel D."/>
            <person name="Pearce A.V."/>
            <person name="Peck A.I."/>
            <person name="Pelan S."/>
            <person name="Phelps K."/>
            <person name="Phillimore B.J."/>
            <person name="Plumb R."/>
            <person name="Rajan J."/>
            <person name="Raymond C."/>
            <person name="Rouse G."/>
            <person name="Saenphimmachak C."/>
            <person name="Sehra H.K."/>
            <person name="Sheridan E."/>
            <person name="Shownkeen R."/>
            <person name="Sims S."/>
            <person name="Skuce C.D."/>
            <person name="Smith M."/>
            <person name="Steward C."/>
            <person name="Subramanian S."/>
            <person name="Sycamore N."/>
            <person name="Tracey A."/>
            <person name="Tromans A."/>
            <person name="Van Helmond Z."/>
            <person name="Wall M."/>
            <person name="Wallis J.M."/>
            <person name="White S."/>
            <person name="Whitehead S.L."/>
            <person name="Wilkinson J.E."/>
            <person name="Willey D.L."/>
            <person name="Williams H."/>
            <person name="Wilming L."/>
            <person name="Wray P.W."/>
            <person name="Wu Z."/>
            <person name="Coulson A."/>
            <person name="Vaudin M."/>
            <person name="Sulston J.E."/>
            <person name="Durbin R.M."/>
            <person name="Hubbard T."/>
            <person name="Wooster R."/>
            <person name="Dunham I."/>
            <person name="Carter N.P."/>
            <person name="McVean G."/>
            <person name="Ross M.T."/>
            <person name="Harrow J."/>
            <person name="Olson M.V."/>
            <person name="Beck S."/>
            <person name="Rogers J."/>
            <person name="Bentley D.R."/>
        </authorList>
    </citation>
    <scope>NUCLEOTIDE SEQUENCE [LARGE SCALE GENOMIC DNA]</scope>
</reference>
<reference key="11">
    <citation type="submission" date="2005-07" db="EMBL/GenBank/DDBJ databases">
        <authorList>
            <person name="Mural R.J."/>
            <person name="Istrail S."/>
            <person name="Sutton G.G."/>
            <person name="Florea L."/>
            <person name="Halpern A.L."/>
            <person name="Mobarry C.M."/>
            <person name="Lippert R."/>
            <person name="Walenz B."/>
            <person name="Shatkay H."/>
            <person name="Dew I."/>
            <person name="Miller J.R."/>
            <person name="Flanigan M.J."/>
            <person name="Edwards N.J."/>
            <person name="Bolanos R."/>
            <person name="Fasulo D."/>
            <person name="Halldorsson B.V."/>
            <person name="Hannenhalli S."/>
            <person name="Turner R."/>
            <person name="Yooseph S."/>
            <person name="Lu F."/>
            <person name="Nusskern D.R."/>
            <person name="Shue B.C."/>
            <person name="Zheng X.H."/>
            <person name="Zhong F."/>
            <person name="Delcher A.L."/>
            <person name="Huson D.H."/>
            <person name="Kravitz S.A."/>
            <person name="Mouchard L."/>
            <person name="Reinert K."/>
            <person name="Remington K.A."/>
            <person name="Clark A.G."/>
            <person name="Waterman M.S."/>
            <person name="Eichler E.E."/>
            <person name="Adams M.D."/>
            <person name="Hunkapiller M.W."/>
            <person name="Myers E.W."/>
            <person name="Venter J.C."/>
        </authorList>
    </citation>
    <scope>NUCLEOTIDE SEQUENCE [LARGE SCALE GENOMIC DNA]</scope>
</reference>
<reference key="12">
    <citation type="journal article" date="2004" name="Genome Res.">
        <title>The status, quality, and expansion of the NIH full-length cDNA project: the Mammalian Gene Collection (MGC).</title>
        <authorList>
            <consortium name="The MGC Project Team"/>
        </authorList>
    </citation>
    <scope>NUCLEOTIDE SEQUENCE [LARGE SCALE MRNA] (ISOFORM ALPHA-ENOLASE)</scope>
    <source>
        <tissue>Brain</tissue>
        <tissue>Eye</tissue>
        <tissue>Lung</tissue>
        <tissue>Ovary</tissue>
        <tissue>Placenta</tissue>
        <tissue>Skin</tissue>
    </source>
</reference>
<reference key="13">
    <citation type="journal article" date="1997" name="Electrophoresis">
        <title>A two-dimensional gel database of human colon carcinoma proteins.</title>
        <authorList>
            <person name="Ji H."/>
            <person name="Reid G.E."/>
            <person name="Moritz R.L."/>
            <person name="Eddes J.S."/>
            <person name="Burgess A.W."/>
            <person name="Simpson R.J."/>
        </authorList>
    </citation>
    <scope>PROTEIN SEQUENCE OF 2-9 (ISOFORM ALPHA-ENOLASE)</scope>
    <source>
        <tissue>Colon carcinoma</tissue>
    </source>
</reference>
<reference key="14">
    <citation type="submission" date="2009-03" db="UniProtKB">
        <authorList>
            <person name="Bienvenut W.V."/>
            <person name="Lilla S."/>
            <person name="Zebisch A."/>
            <person name="Kolch W."/>
        </authorList>
    </citation>
    <scope>PROTEIN SEQUENCE OF 2-28; 65-80; 121-162; 234-253; 270-281; 331-394 AND 407-420</scope>
    <scope>CLEAVAGE OF INITIATOR METHIONINE</scope>
    <scope>ACETYLATION AT SER-2</scope>
    <scope>IDENTIFICATION BY MASS SPECTROMETRY</scope>
    <source>
        <tissue>Colon carcinoma</tissue>
    </source>
</reference>
<reference key="15">
    <citation type="submission" date="2008-12" db="UniProtKB">
        <authorList>
            <person name="Lubec G."/>
            <person name="Vishwanath V."/>
            <person name="Chen W.-Q."/>
            <person name="Sun Y."/>
        </authorList>
    </citation>
    <scope>PROTEIN SEQUENCE OF 16-28; 33-50; 93-103; 106-120; 163-179; 184-193; 203-221; 240-253; 257-262; 270-281; 286-326; 336-394 AND 407-412</scope>
    <scope>IDENTIFICATION BY MASS SPECTROMETRY</scope>
    <source>
        <tissue>Brain</tissue>
        <tissue>Cajal-Retzius cell</tissue>
        <tissue>Fetal brain cortex</tissue>
    </source>
</reference>
<reference key="16">
    <citation type="journal article" date="1998" name="Genomics">
        <title>Molecular cloning and expression analysis of five novel genes in chromosome 1p36.</title>
        <authorList>
            <person name="Onyango P."/>
            <person name="Lubyova B."/>
            <person name="Gardellin P."/>
            <person name="Kurzbauer R."/>
            <person name="Weith A."/>
        </authorList>
    </citation>
    <scope>NUCLEOTIDE SEQUENCE [MRNA] OF 166-434</scope>
</reference>
<reference key="17">
    <citation type="journal article" date="1997" name="Genome Res.">
        <title>Large-scale concatenation cDNA sequencing.</title>
        <authorList>
            <person name="Yu W."/>
            <person name="Andersson B."/>
            <person name="Worley K.C."/>
            <person name="Muzny D.M."/>
            <person name="Ding Y."/>
            <person name="Liu W."/>
            <person name="Ricafrente J.Y."/>
            <person name="Wentland M.A."/>
            <person name="Lennon G."/>
            <person name="Gibbs R.A."/>
        </authorList>
    </citation>
    <scope>NUCLEOTIDE SEQUENCE [LARGE SCALE MRNA] OF 171-434</scope>
    <source>
        <tissue>Brain</tissue>
    </source>
</reference>
<reference key="18">
    <citation type="journal article" date="1992" name="Cytotechnology">
        <title>Purification and characterization of immunoglobulin production stimulating factor-II beta derived from Namalwa cells.</title>
        <authorList>
            <person name="Sugahara T."/>
            <person name="Nakajima H."/>
            <person name="Shirahata S."/>
            <person name="Murakami H."/>
        </authorList>
    </citation>
    <scope>PROTEIN SEQUENCE OF 203-228</scope>
    <scope>FUNCTION</scope>
    <scope>CATALYTIC ACTIVITY</scope>
    <scope>BIOPHYSICOCHEMICAL PROPERTIES</scope>
    <scope>PATHWAY</scope>
    <source>
        <tissue>Lymphoma</tissue>
    </source>
</reference>
<reference key="19">
    <citation type="journal article" date="1994" name="Enzyme Protein">
        <title>Induced expression of alpha-enolase in differentiated diffuse large cell lymphoma.</title>
        <authorList>
            <person name="Mohamad R.M."/>
            <person name="Hamdan M.Y."/>
            <person name="Maki A."/>
            <person name="Al-Katib A."/>
        </authorList>
    </citation>
    <scope>PROTEIN SEQUENCE OF 270-281 AND 307-321</scope>
    <scope>INDUCTION IN DIFFUSE LARGE CELL LYMPHOMA</scope>
</reference>
<reference key="20">
    <citation type="journal article" date="1999" name="Mol. Cell. Biol.">
        <title>Functional domains of c-myc promoter binding protein 1 involved in transcriptional repression and cell growth regulation.</title>
        <authorList>
            <person name="Ghosh A.K."/>
            <person name="Steele R."/>
            <person name="Ray R.B."/>
        </authorList>
    </citation>
    <scope>FUNCTION OF MBP1</scope>
    <scope>IDENTIFICATION OF REPRESSOR DOMAINS</scope>
    <scope>MUTAGENESIS OF LEU-384 AND LEU-388</scope>
</reference>
<reference key="21">
    <citation type="journal article" date="2000" name="FEBS Lett.">
        <title>ENO1 gene product binds to the c-myc promoter and acts as a transcriptional repressor: relationship with Myc promoter-binding protein 1 (MBP-1).</title>
        <authorList>
            <person name="Feo S."/>
            <person name="Arcuri D."/>
            <person name="Piddini E."/>
            <person name="Passantino R."/>
            <person name="Giallongo A."/>
        </authorList>
    </citation>
    <scope>FUNCTION AS A C-MYC TRANSCRIPTIONAL REPRESSOR</scope>
    <scope>SUBCELLULAR LOCATION</scope>
</reference>
<reference key="22">
    <citation type="journal article" date="2003" name="Am. J. Hematol.">
        <title>Inhibition of cell surface mediated plasminogen activation by a monoclonal antibody against alpha-enolase.</title>
        <authorList>
            <person name="Lopez-Alemany R."/>
            <person name="Longstaff C."/>
            <person name="Hawley S."/>
            <person name="Mirshahi M."/>
            <person name="Fabregas P."/>
            <person name="Jardi M."/>
            <person name="Merton E."/>
            <person name="Miles L.A."/>
            <person name="Felez J."/>
        </authorList>
    </citation>
    <scope>FUNCTION IN PLASMINOGEN ACTIVATION</scope>
</reference>
<reference key="23">
    <citation type="journal article" date="1997" name="Thromb. Haemost.">
        <title>Identification of an epitope of alpha-enolase (a candidate plasminogen receptor) by phage display.</title>
        <authorList>
            <person name="Arza B."/>
            <person name="Felez J."/>
            <person name="Lopez-Alemany R."/>
            <person name="Miles L.A."/>
            <person name="Munoz-Canoves P."/>
        </authorList>
    </citation>
    <scope>INTERACTION WITH PLG</scope>
</reference>
<reference key="24">
    <citation type="journal article" date="1998" name="J. Autoimmun.">
        <title>Anti-enolase-alpha autoantibodies in cancer-associated retinopathy: epitope mapping and cytotoxicity on retinal cells.</title>
        <authorList>
            <person name="Adamus G."/>
            <person name="Amundson D."/>
            <person name="Seigel G.M."/>
            <person name="Machnicki M."/>
        </authorList>
    </citation>
    <scope>EPITOPE MAPPING</scope>
    <scope>ASSOCIATION WITH CAR</scope>
</reference>
<reference key="25">
    <citation type="journal article" date="2000" name="J. Biol. Chem.">
        <title>Structural analysis of alpha-enolase. Mapping the functional domains involved in down-regulation of the c-myc protooncogene.</title>
        <authorList>
            <person name="Subramanian A."/>
            <person name="Miller D.M."/>
        </authorList>
    </citation>
    <scope>IDENTIFICATION OF MBP1 AS AN ALPHA-ENOLASE ALTERNATIVE INITIATION PRODUCT</scope>
    <scope>MUTAGENESIS OF MET-94 AND MET-97</scope>
</reference>
<reference key="26">
    <citation type="journal article" date="2001" name="Cell. Mol. Life Sci.">
        <title>Multifunctional alpha-enolase: its role in diseases.</title>
        <authorList>
            <person name="Pancholi V."/>
        </authorList>
    </citation>
    <scope>REVIEW</scope>
</reference>
<reference key="27">
    <citation type="journal article" date="2001" name="Mol. Cell. Biol.">
        <title>A novel 16-kilodalton cellular protein physically interacts with and antagonizes the functional activity of c-myc promoter-binding protein 1.</title>
        <authorList>
            <person name="Ghosh A.K."/>
            <person name="Majumder M."/>
            <person name="Steele R."/>
            <person name="White R.A."/>
            <person name="Ray R.B."/>
        </authorList>
    </citation>
    <scope>INTERACTION WITH TRAPPC2B (ISOFORM MBP-1)</scope>
</reference>
<reference key="28">
    <citation type="journal article" date="2002" name="FEBS Lett.">
        <title>Proteomic analysis of human brain identifies alpha-enolase as a novel autoantigen in Hashimoto's encephalopathy.</title>
        <authorList>
            <person name="Ochi H."/>
            <person name="Horiuchi I."/>
            <person name="Araki N."/>
            <person name="Toda T."/>
            <person name="Araki T."/>
            <person name="Sato K."/>
            <person name="Murai H."/>
            <person name="Osoegawa M."/>
            <person name="Yamada T."/>
            <person name="Okamura K."/>
            <person name="Ogino T."/>
            <person name="Mizumoto K."/>
            <person name="Yamashita H."/>
            <person name="Saya H."/>
            <person name="Kira J."/>
        </authorList>
    </citation>
    <scope>IDENTIFICATION AS AN AUTOANTIGEN IN HASHIMOTO ENCEPHALOPATHY</scope>
</reference>
<reference key="29">
    <citation type="journal article" date="2005" name="Biochem. Biophys. Res. Commun.">
        <title>Proteomic identification of proteins conjugated to ISG15 in mouse and human cells.</title>
        <authorList>
            <person name="Giannakopoulos N.V."/>
            <person name="Luo J.K."/>
            <person name="Papov V."/>
            <person name="Zou W."/>
            <person name="Lenschow D.J."/>
            <person name="Jacobs B.S."/>
            <person name="Borden E.C."/>
            <person name="Li J."/>
            <person name="Virgin H.W."/>
            <person name="Zhang D.E."/>
        </authorList>
    </citation>
    <scope>ISGYLATION</scope>
</reference>
<reference key="30">
    <citation type="journal article" date="2005" name="Nat. Biotechnol.">
        <title>Immunoaffinity profiling of tyrosine phosphorylation in cancer cells.</title>
        <authorList>
            <person name="Rush J."/>
            <person name="Moritz A."/>
            <person name="Lee K.A."/>
            <person name="Guo A."/>
            <person name="Goss V.L."/>
            <person name="Spek E.J."/>
            <person name="Zhang H."/>
            <person name="Zha X.-M."/>
            <person name="Polakiewicz R.D."/>
            <person name="Comb M.J."/>
        </authorList>
    </citation>
    <scope>PHOSPHORYLATION [LARGE SCALE ANALYSIS] AT TYR-44 AND TYR-287</scope>
    <scope>IDENTIFICATION BY MASS SPECTROMETRY [LARGE SCALE ANALYSIS]</scope>
</reference>
<reference key="31">
    <citation type="journal article" date="2006" name="Cell. Microbiol.">
        <title>Transcriptomic and proteomic analyses of rhabdomyosarcoma cells reveal differential cellular gene expression in response to enterovirus 71 infection.</title>
        <authorList>
            <person name="Leong W.F."/>
            <person name="Chow V.T."/>
        </authorList>
    </citation>
    <scope>INDUCTION</scope>
    <scope>IDENTIFICATION BY MASS SPECTROMETRY</scope>
</reference>
<reference key="32">
    <citation type="journal article" date="2006" name="Proc. Natl. Acad. Sci. U.S.A.">
        <title>HERC5 is an IFN-induced HECT-type E3 protein ligase that mediates type I IFN-induced ISGylation of protein targets.</title>
        <authorList>
            <person name="Wong J.J."/>
            <person name="Pung Y.F."/>
            <person name="Sze N.S."/>
            <person name="Chin K.C."/>
        </authorList>
    </citation>
    <scope>ISGYLATION</scope>
</reference>
<reference key="33">
    <citation type="journal article" date="2008" name="Proc. Natl. Acad. Sci. U.S.A.">
        <title>A quantitative atlas of mitotic phosphorylation.</title>
        <authorList>
            <person name="Dephoure N."/>
            <person name="Zhou C."/>
            <person name="Villen J."/>
            <person name="Beausoleil S.A."/>
            <person name="Bakalarski C.E."/>
            <person name="Elledge S.J."/>
            <person name="Gygi S.P."/>
        </authorList>
    </citation>
    <scope>PHOSPHORYLATION [LARGE SCALE ANALYSIS] AT SER-254 AND SER-263</scope>
    <scope>IDENTIFICATION BY MASS SPECTROMETRY [LARGE SCALE ANALYSIS]</scope>
    <source>
        <tissue>Cervix carcinoma</tissue>
    </source>
</reference>
<reference key="34">
    <citation type="journal article" date="2009" name="Sci. Signal.">
        <title>Quantitative phosphoproteomic analysis of T cell receptor signaling reveals system-wide modulation of protein-protein interactions.</title>
        <authorList>
            <person name="Mayya V."/>
            <person name="Lundgren D.H."/>
            <person name="Hwang S.-I."/>
            <person name="Rezaul K."/>
            <person name="Wu L."/>
            <person name="Eng J.K."/>
            <person name="Rodionov V."/>
            <person name="Han D.K."/>
        </authorList>
    </citation>
    <scope>PHOSPHORYLATION [LARGE SCALE ANALYSIS] AT SER-272</scope>
    <scope>IDENTIFICATION BY MASS SPECTROMETRY [LARGE SCALE ANALYSIS]</scope>
    <source>
        <tissue>Leukemic T-cell</tissue>
    </source>
</reference>
<reference key="35">
    <citation type="journal article" date="2009" name="Science">
        <title>Lysine acetylation targets protein complexes and co-regulates major cellular functions.</title>
        <authorList>
            <person name="Choudhary C."/>
            <person name="Kumar C."/>
            <person name="Gnad F."/>
            <person name="Nielsen M.L."/>
            <person name="Rehman M."/>
            <person name="Walther T.C."/>
            <person name="Olsen J.V."/>
            <person name="Mann M."/>
        </authorList>
    </citation>
    <scope>ACETYLATION [LARGE SCALE ANALYSIS] AT LYS-5; LYS-64; LYS-71; LYS-89; LYS-126; LYS-193; LYS-199; LYS-228; LYS-233; LYS-256; LYS-281; LYS-285 AND LYS-420</scope>
    <scope>IDENTIFICATION BY MASS SPECTROMETRY [LARGE SCALE ANALYSIS]</scope>
</reference>
<reference key="36">
    <citation type="journal article" date="2010" name="Sci. Signal.">
        <title>Quantitative phosphoproteomics reveals widespread full phosphorylation site occupancy during mitosis.</title>
        <authorList>
            <person name="Olsen J.V."/>
            <person name="Vermeulen M."/>
            <person name="Santamaria A."/>
            <person name="Kumar C."/>
            <person name="Miller M.L."/>
            <person name="Jensen L.J."/>
            <person name="Gnad F."/>
            <person name="Cox J."/>
            <person name="Jensen T.S."/>
            <person name="Nigg E.A."/>
            <person name="Brunak S."/>
            <person name="Mann M."/>
        </authorList>
    </citation>
    <scope>IDENTIFICATION BY MASS SPECTROMETRY [LARGE SCALE ANALYSIS]</scope>
    <source>
        <tissue>Cervix carcinoma</tissue>
    </source>
</reference>
<reference key="37">
    <citation type="journal article" date="2011" name="BMC Syst. Biol.">
        <title>Initial characterization of the human central proteome.</title>
        <authorList>
            <person name="Burkard T.R."/>
            <person name="Planyavsky M."/>
            <person name="Kaupe I."/>
            <person name="Breitwieser F.P."/>
            <person name="Buerckstuemmer T."/>
            <person name="Bennett K.L."/>
            <person name="Superti-Furga G."/>
            <person name="Colinge J."/>
        </authorList>
    </citation>
    <scope>IDENTIFICATION BY MASS SPECTROMETRY [LARGE SCALE ANALYSIS]</scope>
</reference>
<reference key="38">
    <citation type="journal article" date="2011" name="Mol. Cell. Proteomics">
        <title>The first identification of lysine malonylation substrates and its regulatory enzyme.</title>
        <authorList>
            <person name="Peng C."/>
            <person name="Lu Z."/>
            <person name="Xie Z."/>
            <person name="Cheng Z."/>
            <person name="Chen Y."/>
            <person name="Tan M."/>
            <person name="Luo H."/>
            <person name="Zhang Y."/>
            <person name="He W."/>
            <person name="Yang K."/>
            <person name="Zwaans B.M."/>
            <person name="Tishkoff D."/>
            <person name="Ho L."/>
            <person name="Lombard D."/>
            <person name="He T.C."/>
            <person name="Dai J."/>
            <person name="Verdin E."/>
            <person name="Ye Y."/>
            <person name="Zhao Y."/>
        </authorList>
    </citation>
    <scope>MALONYLATION AT LYS-233 AND LYS-420</scope>
</reference>
<reference key="39">
    <citation type="journal article" date="2012" name="J. Proteome Res.">
        <title>Resveratrol-induced changes of the human adipocyte secretion profile.</title>
        <authorList>
            <person name="Rosenow A."/>
            <person name="Noben J.P."/>
            <person name="Jocken J."/>
            <person name="Kallendrusch S."/>
            <person name="Fischer-Posovszky P."/>
            <person name="Mariman E.C."/>
            <person name="Renes J."/>
        </authorList>
    </citation>
    <scope>IDENTIFICATION BY MASS SPECTROMETRY [LARGE SCALE ANALYSIS]</scope>
</reference>
<reference key="40">
    <citation type="journal article" date="2013" name="J. Proteome Res.">
        <title>Toward a comprehensive characterization of a human cancer cell phosphoproteome.</title>
        <authorList>
            <person name="Zhou H."/>
            <person name="Di Palma S."/>
            <person name="Preisinger C."/>
            <person name="Peng M."/>
            <person name="Polat A.N."/>
            <person name="Heck A.J."/>
            <person name="Mohammed S."/>
        </authorList>
    </citation>
    <scope>PHOSPHORYLATION [LARGE SCALE ANALYSIS] AT SER-27; SER-254; SER-263 AND SER-272</scope>
    <scope>IDENTIFICATION BY MASS SPECTROMETRY [LARGE SCALE ANALYSIS]</scope>
    <source>
        <tissue>Cervix carcinoma</tissue>
        <tissue>Erythroleukemia</tissue>
    </source>
</reference>
<reference key="41">
    <citation type="journal article" date="2014" name="J. Proteomics">
        <title>An enzyme assisted RP-RPLC approach for in-depth analysis of human liver phosphoproteome.</title>
        <authorList>
            <person name="Bian Y."/>
            <person name="Song C."/>
            <person name="Cheng K."/>
            <person name="Dong M."/>
            <person name="Wang F."/>
            <person name="Huang J."/>
            <person name="Sun D."/>
            <person name="Wang L."/>
            <person name="Ye M."/>
            <person name="Zou H."/>
        </authorList>
    </citation>
    <scope>PHOSPHORYLATION [LARGE SCALE ANALYSIS] AT SER-263 AND SER-291</scope>
    <scope>IDENTIFICATION BY MASS SPECTROMETRY [LARGE SCALE ANALYSIS]</scope>
    <source>
        <tissue>Liver</tissue>
    </source>
</reference>
<reference key="42">
    <citation type="journal article" date="2015" name="Proteomics">
        <title>N-terminome analysis of the human mitochondrial proteome.</title>
        <authorList>
            <person name="Vaca Jacome A.S."/>
            <person name="Rabilloud T."/>
            <person name="Schaeffer-Reiss C."/>
            <person name="Rompais M."/>
            <person name="Ayoub D."/>
            <person name="Lane L."/>
            <person name="Bairoch A."/>
            <person name="Van Dorsselaer A."/>
            <person name="Carapito C."/>
        </authorList>
    </citation>
    <scope>ACETYLATION [LARGE SCALE ANALYSIS] AT SER-2</scope>
    <scope>CLEAVAGE OF INITIATOR METHIONINE [LARGE SCALE ANALYSIS]</scope>
    <scope>IDENTIFICATION BY MASS SPECTROMETRY [LARGE SCALE ANALYSIS]</scope>
</reference>
<reference key="43">
    <citation type="journal article" date="2017" name="Nat. Struct. Mol. Biol.">
        <title>Site-specific mapping of the human SUMO proteome reveals co-modification with phosphorylation.</title>
        <authorList>
            <person name="Hendriks I.A."/>
            <person name="Lyon D."/>
            <person name="Young C."/>
            <person name="Jensen L.J."/>
            <person name="Vertegaal A.C."/>
            <person name="Nielsen M.L."/>
        </authorList>
    </citation>
    <scope>SUMOYLATION [LARGE SCALE ANALYSIS] AT LYS-202</scope>
    <scope>IDENTIFICATION BY MASS SPECTROMETRY [LARGE SCALE ANALYSIS]</scope>
</reference>
<reference key="44">
    <citation type="journal article" date="2017" name="Nature">
        <title>CMTM6 maintains the expression of PD-L1 and regulates anti-tumour immunity.</title>
        <authorList>
            <person name="Burr M.L."/>
            <person name="Sparbier C.E."/>
            <person name="Chan Y.C."/>
            <person name="Williamson J.C."/>
            <person name="Woods K."/>
            <person name="Beavis P.A."/>
            <person name="Lam E.Y.N."/>
            <person name="Henderson M.A."/>
            <person name="Bell C.C."/>
            <person name="Stolzenburg S."/>
            <person name="Gilan O."/>
            <person name="Bloor S."/>
            <person name="Noori T."/>
            <person name="Morgens D.W."/>
            <person name="Bassik M.C."/>
            <person name="Neeson P.J."/>
            <person name="Behren A."/>
            <person name="Darcy P.K."/>
            <person name="Dawson S.J."/>
            <person name="Voskoboinik I."/>
            <person name="Trapani J.A."/>
            <person name="Cebon J."/>
            <person name="Lehner P.J."/>
            <person name="Dawson M.A."/>
        </authorList>
    </citation>
    <scope>INTERACTION WITH CMTM6</scope>
    <scope>IDENTIFICATION BY MASS SPECTROMETRY</scope>
</reference>
<reference key="45">
    <citation type="journal article" date="2018" name="Mol. Cell">
        <title>p300-mediated lysine 2-hydroxyisobutyrylation regulates glycolysis.</title>
        <authorList>
            <person name="Huang H."/>
            <person name="Tang S."/>
            <person name="Ji M."/>
            <person name="Tang Z."/>
            <person name="Shimada M."/>
            <person name="Liu X."/>
            <person name="Qi S."/>
            <person name="Locasale J.W."/>
            <person name="Roeder R.G."/>
            <person name="Zhao Y."/>
            <person name="Li X."/>
        </authorList>
    </citation>
    <scope>FUNCTION</scope>
    <scope>CATALYTIC ACTIVITY</scope>
    <scope>HYDROXYBUTYRYLATION AT LYS-228 AND LYS-281</scope>
    <scope>MUTAGENESIS OF LYS-281</scope>
</reference>
<reference key="46">
    <citation type="journal article" date="2008" name="Acta Crystallogr. D">
        <title>Structure of human alpha-enolase (hENO1), a multifunctional glycolytic enzyme.</title>
        <authorList>
            <person name="Kang H.J."/>
            <person name="Jung S.K."/>
            <person name="Kim S.J."/>
            <person name="Chung S.J."/>
        </authorList>
    </citation>
    <scope>X-RAY CRYSTALLOGRAPHY (2.2 ANGSTROMS) OF 2-434</scope>
    <scope>SUBUNIT</scope>
    <scope>COFACTOR</scope>
    <scope>METAL-BINDING SITES</scope>
</reference>
<evidence type="ECO:0000250" key="1"/>
<evidence type="ECO:0000250" key="2">
    <source>
        <dbReference type="UniProtKB" id="P00924"/>
    </source>
</evidence>
<evidence type="ECO:0000250" key="3">
    <source>
        <dbReference type="UniProtKB" id="P17182"/>
    </source>
</evidence>
<evidence type="ECO:0000269" key="4">
    <source>
    </source>
</evidence>
<evidence type="ECO:0000269" key="5">
    <source>
    </source>
</evidence>
<evidence type="ECO:0000269" key="6">
    <source>
    </source>
</evidence>
<evidence type="ECO:0000269" key="7">
    <source>
    </source>
</evidence>
<evidence type="ECO:0000269" key="8">
    <source>
    </source>
</evidence>
<evidence type="ECO:0000269" key="9">
    <source>
    </source>
</evidence>
<evidence type="ECO:0000269" key="10">
    <source>
    </source>
</evidence>
<evidence type="ECO:0000269" key="11">
    <source>
    </source>
</evidence>
<evidence type="ECO:0000269" key="12">
    <source>
    </source>
</evidence>
<evidence type="ECO:0000269" key="13">
    <source>
    </source>
</evidence>
<evidence type="ECO:0000269" key="14">
    <source>
    </source>
</evidence>
<evidence type="ECO:0000269" key="15">
    <source>
    </source>
</evidence>
<evidence type="ECO:0000269" key="16">
    <source>
    </source>
</evidence>
<evidence type="ECO:0000269" key="17">
    <source>
    </source>
</evidence>
<evidence type="ECO:0000269" key="18">
    <source>
    </source>
</evidence>
<evidence type="ECO:0000269" key="19">
    <source>
    </source>
</evidence>
<evidence type="ECO:0000269" key="20">
    <source ref="14"/>
</evidence>
<evidence type="ECO:0000269" key="21">
    <source ref="9"/>
</evidence>
<evidence type="ECO:0000303" key="22">
    <source>
    </source>
</evidence>
<evidence type="ECO:0000305" key="23"/>
<evidence type="ECO:0000305" key="24">
    <source>
    </source>
</evidence>
<evidence type="ECO:0007744" key="25">
    <source>
    </source>
</evidence>
<evidence type="ECO:0007744" key="26">
    <source>
    </source>
</evidence>
<evidence type="ECO:0007744" key="27">
    <source>
    </source>
</evidence>
<evidence type="ECO:0007744" key="28">
    <source>
    </source>
</evidence>
<evidence type="ECO:0007744" key="29">
    <source>
    </source>
</evidence>
<evidence type="ECO:0007744" key="30">
    <source>
    </source>
</evidence>
<evidence type="ECO:0007744" key="31">
    <source>
    </source>
</evidence>
<evidence type="ECO:0007744" key="32">
    <source>
    </source>
</evidence>
<evidence type="ECO:0007829" key="33">
    <source>
        <dbReference type="PDB" id="2PSN"/>
    </source>
</evidence>
<sequence length="434" mass="47169">MSILKIHAREIFDSRGNPTVEVDLFTSKGLFRAAVPSGASTGIYEALELRDNDKTRYMGKGVSKAVEHINKTIAPALVSKKLNVTEQEKIDKLMIEMDGTENKSKFGANAILGVSLAVCKAGAVEKGVPLYRHIADLAGNSEVILPVPAFNVINGGSHAGNKLAMQEFMILPVGAANFREAMRIGAEVYHNLKNVIKEKYGKDATNVGDEGGFAPNILENKEGLELLKTAIGKAGYTDKVVIGMDVAASEFFRSGKYDLDFKSPDDPSRYISPDQLADLYKSFIKDYPVVSIEDPFDQDDWGAWQKFTASAGIQVVGDDLTVTNPKRIAKAVNEKSCNCLLLKVNQIGSVTESLQACKLAQANGWGVMVSHRSGETEDTFIADLVVGLCTGQIKTGAPCRSERLAKYNQLLRIEEELGSKAKFAGRNFRNPLAK</sequence>
<accession>P06733</accession>
<accession>B2RD59</accession>
<accession>P22712</accession>
<accession>Q16704</accession>
<accession>Q4TUS4</accession>
<accession>Q53FT9</accession>
<accession>Q53HR3</accession>
<accession>Q658M5</accession>
<accession>Q6GMP2</accession>
<accession>Q71V37</accession>
<accession>Q7Z3V6</accession>
<accession>Q8WU71</accession>
<accession>Q96GV1</accession>
<accession>Q9BT62</accession>
<accession>Q9UCH6</accession>
<accession>Q9UM55</accession>
<keyword id="KW-0002">3D-structure</keyword>
<keyword id="KW-0007">Acetylation</keyword>
<keyword id="KW-0024">Alternative initiation</keyword>
<keyword id="KW-1003">Cell membrane</keyword>
<keyword id="KW-0963">Cytoplasm</keyword>
<keyword id="KW-0903">Direct protein sequencing</keyword>
<keyword id="KW-0238">DNA-binding</keyword>
<keyword id="KW-0324">Glycolysis</keyword>
<keyword id="KW-0379">Hydroxylation</keyword>
<keyword id="KW-1017">Isopeptide bond</keyword>
<keyword id="KW-0456">Lyase</keyword>
<keyword id="KW-0460">Magnesium</keyword>
<keyword id="KW-0472">Membrane</keyword>
<keyword id="KW-0479">Metal-binding</keyword>
<keyword id="KW-0539">Nucleus</keyword>
<keyword id="KW-0597">Phosphoprotein</keyword>
<keyword id="KW-0617">Plasminogen activation</keyword>
<keyword id="KW-1267">Proteomics identification</keyword>
<keyword id="KW-1185">Reference proteome</keyword>
<keyword id="KW-0678">Repressor</keyword>
<keyword id="KW-0804">Transcription</keyword>
<keyword id="KW-0805">Transcription regulation</keyword>
<keyword id="KW-0832">Ubl conjugation</keyword>
<protein>
    <recommendedName>
        <fullName>Alpha-enolase</fullName>
        <ecNumber evidence="9 17">4.2.1.11</ecNumber>
    </recommendedName>
    <alternativeName>
        <fullName>2-phospho-D-glycerate hydro-lyase</fullName>
    </alternativeName>
    <alternativeName>
        <fullName>C-myc promoter-binding protein</fullName>
    </alternativeName>
    <alternativeName>
        <fullName>Enolase 1</fullName>
    </alternativeName>
    <alternativeName>
        <fullName>MBP-1</fullName>
    </alternativeName>
    <alternativeName>
        <fullName>MPB-1</fullName>
    </alternativeName>
    <alternativeName>
        <fullName>Non-neural enolase</fullName>
        <shortName>NNE</shortName>
    </alternativeName>
    <alternativeName>
        <fullName>Phosphopyruvate hydratase</fullName>
    </alternativeName>
    <alternativeName>
        <fullName>Plasminogen-binding protein</fullName>
    </alternativeName>
</protein>
<organism>
    <name type="scientific">Homo sapiens</name>
    <name type="common">Human</name>
    <dbReference type="NCBI Taxonomy" id="9606"/>
    <lineage>
        <taxon>Eukaryota</taxon>
        <taxon>Metazoa</taxon>
        <taxon>Chordata</taxon>
        <taxon>Craniata</taxon>
        <taxon>Vertebrata</taxon>
        <taxon>Euteleostomi</taxon>
        <taxon>Mammalia</taxon>
        <taxon>Eutheria</taxon>
        <taxon>Euarchontoglires</taxon>
        <taxon>Primates</taxon>
        <taxon>Haplorrhini</taxon>
        <taxon>Catarrhini</taxon>
        <taxon>Hominidae</taxon>
        <taxon>Homo</taxon>
    </lineage>
</organism>
<comment type="function">
    <text evidence="6 8 9 14 17">Glycolytic enzyme the catalyzes the conversion of 2-phosphoglycerate to phosphoenolpyruvate (PubMed:1369209, PubMed:29775581). In addition to glycolysis, involved in various processes such as growth control, hypoxia tolerance and allergic responses (PubMed:10802057, PubMed:12666133, PubMed:2005901, PubMed:29775581). May also function in the intravascular and pericellular fibrinolytic system due to its ability to serve as a receptor and activator of plasminogen on the cell surface of several cell-types such as leukocytes and neurons (PubMed:12666133). Stimulates immunoglobulin production (PubMed:1369209).</text>
</comment>
<comment type="function">
    <molecule>Isoform MBP-1</molecule>
    <text evidence="4">Binds to the myc promoter and acts as a transcriptional repressor. May be a tumor suppressor.</text>
</comment>
<comment type="catalytic activity">
    <reaction evidence="9 17">
        <text>(2R)-2-phosphoglycerate = phosphoenolpyruvate + H2O</text>
        <dbReference type="Rhea" id="RHEA:10164"/>
        <dbReference type="ChEBI" id="CHEBI:15377"/>
        <dbReference type="ChEBI" id="CHEBI:58289"/>
        <dbReference type="ChEBI" id="CHEBI:58702"/>
        <dbReference type="EC" id="4.2.1.11"/>
    </reaction>
</comment>
<comment type="cofactor">
    <cofactor evidence="13">
        <name>Mg(2+)</name>
        <dbReference type="ChEBI" id="CHEBI:18420"/>
    </cofactor>
    <text evidence="13">Binds two Mg(2+) per subunit. Required for catalysis and for stabilizing the dimer.</text>
</comment>
<comment type="biophysicochemical properties">
    <phDependence>
        <text evidence="9">Enolase activity is lost above pH 9.0. Immunoglobulin production stimulating activity is retained at pH 13.0.</text>
    </phDependence>
</comment>
<comment type="pathway">
    <text evidence="24">Carbohydrate degradation; glycolysis; pyruvate from D-glyceraldehyde 3-phosphate: step 4/5.</text>
</comment>
<comment type="subunit">
    <text evidence="3 7 13 16 19">Mammalian enolase is composed of 3 isozyme subunits, alpha, beta and gamma, which can form homodimers or heterodimers which are cell-type and development-specific (PubMed:18560153). ENO1 interacts with PLG in the neuronal plasma membrane and promotes its activation. The C-terminal lysine is required for this binding (PubMed:9308760). Isoform MBP-1 interacts with TRAPPC2B (PubMed:11134351). Interacts with ENO4 and PGAM2 (By similarity). Interacts with CMTM6 (PubMed:28813417).</text>
</comment>
<comment type="interaction">
    <interactant intactId="EBI-353877">
        <id>P06733</id>
    </interactant>
    <interactant intactId="EBI-1637793">
        <id>P22303</id>
        <label>ACHE</label>
    </interactant>
    <organismsDiffer>false</organismsDiffer>
    <experiments>2</experiments>
</comment>
<comment type="interaction">
    <interactant intactId="EBI-353877">
        <id>P06733</id>
    </interactant>
    <interactant intactId="EBI-713154">
        <id>P09104</id>
        <label>ENO2</label>
    </interactant>
    <organismsDiffer>false</organismsDiffer>
    <experiments>5</experiments>
</comment>
<comment type="interaction">
    <interactant intactId="EBI-353877">
        <id>P06733</id>
    </interactant>
    <interactant intactId="EBI-4287222">
        <id>P13929</id>
        <label>ENO3</label>
    </interactant>
    <organismsDiffer>false</organismsDiffer>
    <experiments>3</experiments>
</comment>
<comment type="interaction">
    <interactant intactId="EBI-353877">
        <id>P06733</id>
    </interactant>
    <interactant intactId="EBI-466029">
        <id>P42858</id>
        <label>HTT</label>
    </interactant>
    <organismsDiffer>false</organismsDiffer>
    <experiments>13</experiments>
</comment>
<comment type="interaction">
    <interactant intactId="EBI-353877">
        <id>P06733</id>
    </interactant>
    <interactant intactId="EBI-358311">
        <id>P12004</id>
        <label>PCNA</label>
    </interactant>
    <organismsDiffer>false</organismsDiffer>
    <experiments>3</experiments>
</comment>
<comment type="interaction">
    <interactant intactId="EBI-353877">
        <id>P06733</id>
    </interactant>
    <interactant intactId="EBI-681210">
        <id>Q8WZ42</id>
        <label>TTN</label>
    </interactant>
    <organismsDiffer>false</organismsDiffer>
    <experiments>3</experiments>
</comment>
<comment type="interaction">
    <interactant intactId="EBI-353877">
        <id>P06733</id>
    </interactant>
    <interactant intactId="EBI-347088">
        <id>P63104</id>
        <label>YWHAZ</label>
    </interactant>
    <organismsDiffer>false</organismsDiffer>
    <experiments>2</experiments>
</comment>
<comment type="subcellular location">
    <subcellularLocation>
        <location evidence="6">Cytoplasm</location>
    </subcellularLocation>
    <subcellularLocation>
        <location evidence="6">Cell membrane</location>
    </subcellularLocation>
    <subcellularLocation>
        <location evidence="6">Cytoplasm</location>
        <location evidence="6">Myofibril</location>
        <location evidence="6">Sarcomere</location>
        <location evidence="6">M line</location>
    </subcellularLocation>
    <text>Can translocate to the plasma membrane in either the homodimeric (alpha/alpha) or heterodimeric (alpha/gamma) form. ENO1 is localized to the M line.</text>
</comment>
<comment type="subcellular location">
    <molecule>Isoform MBP-1</molecule>
    <subcellularLocation>
        <location>Nucleus</location>
    </subcellularLocation>
</comment>
<comment type="alternative products">
    <event type="alternative initiation"/>
    <isoform>
        <id>P06733-1</id>
        <name>alpha-enolase</name>
        <sequence type="displayed"/>
    </isoform>
    <isoform>
        <id>P06733-2</id>
        <name>MBP-1</name>
        <sequence type="described" ref="VSP_018725"/>
    </isoform>
</comment>
<comment type="tissue specificity">
    <text>The alpha/alpha homodimer is expressed in embryo and in most adult tissues. The alpha/beta heterodimer and the beta/beta homodimer are found in striated muscle, and the alpha/gamma heterodimer and the gamma/gamma homodimer in neurons.</text>
</comment>
<comment type="developmental stage">
    <text>During ontogenesis, there is a transition from the alpha/alpha homodimer to the alpha/beta heterodimer in striated muscle cells, and to the alpha/gamma heterodimer in nerve cells.</text>
</comment>
<comment type="induction">
    <text evidence="11 18">Induced in diffuse large cell lymphoma (DLCL) after treatment with the natural biological agent, Bryo1. Up-regulated in response to enterovirus 71 (EV71) infection (at protein level).</text>
</comment>
<comment type="PTM">
    <text evidence="10 12">ISGylated.</text>
</comment>
<comment type="PTM">
    <text evidence="17">Lysine 2-hydroxyisobutyrylation (Khib) by p300/EP300 activates the phosphopyruvate hydratase activity.</text>
</comment>
<comment type="miscellaneous">
    <text>Used as a diagnostic marker for many tumors and, in the heterodimeric form, alpha/gamma, as a marker for hypoxic brain injury after cardiac arrest. Also marker for endometriosis. Antibodies against alpha-enolase are present in sera from patients with cancer-associated retinopathy syndrome (CAR), a progressive blinding disease which occurs in the presence of systemic tumor growth, primarily small-cell carcinoma of the lung and other malignancies. Is identified as an autoantigen in Hashimoto encephalopathy (HE) a rare autoimmune disease associated with Hashimoto thyroiditis (HT). HT is a disorder in which destructive processes overcome the potential capacity of thyroid replacement leading to hypothyroidism.</text>
</comment>
<comment type="miscellaneous">
    <molecule>Isoform MBP-1</molecule>
    <text evidence="23">It is uncertain whether the alternative initiation site is at Met-94 or at Met-97.</text>
</comment>
<comment type="similarity">
    <text evidence="23">Belongs to the enolase family.</text>
</comment>
<comment type="sequence caution" evidence="23">
    <conflict type="frameshift">
        <sequence resource="EMBL-CDS" id="AAA35698"/>
    </conflict>
</comment>
<comment type="sequence caution" evidence="23">
    <conflict type="miscellaneous discrepancy">
        <sequence resource="EMBL-CDS" id="AAA35698"/>
    </conflict>
    <text>Sequencing errors.</text>
</comment>
<comment type="online information" name="Atlas of Genetics and Cytogenetics in Oncology and Haematology">
    <link uri="https://atlasgeneticsoncology.org/gene/40453/ENO1"/>
</comment>
<gene>
    <name type="primary">ENO1</name>
    <name type="synonym">ENO1L1</name>
    <name type="synonym">MBPB1</name>
    <name type="synonym">MPB1</name>
</gene>